<dbReference type="EC" id="3.4.19.12" evidence="9 10 11 12"/>
<dbReference type="EMBL" id="AJ252060">
    <property type="protein sequence ID" value="CAB64449.1"/>
    <property type="molecule type" value="mRNA"/>
</dbReference>
<dbReference type="EMBL" id="AK302810">
    <property type="protein sequence ID" value="BAG64010.1"/>
    <property type="status" value="ALT_INIT"/>
    <property type="molecule type" value="mRNA"/>
</dbReference>
<dbReference type="EMBL" id="AL731577">
    <property type="status" value="NOT_ANNOTATED_CDS"/>
    <property type="molecule type" value="Genomic_DNA"/>
</dbReference>
<dbReference type="EMBL" id="AL731571">
    <property type="status" value="NOT_ANNOTATED_CDS"/>
    <property type="molecule type" value="Genomic_DNA"/>
</dbReference>
<dbReference type="EMBL" id="CH471066">
    <property type="protein sequence ID" value="EAW49252.1"/>
    <property type="molecule type" value="Genomic_DNA"/>
</dbReference>
<dbReference type="EMBL" id="CH471066">
    <property type="protein sequence ID" value="EAW49253.1"/>
    <property type="molecule type" value="Genomic_DNA"/>
</dbReference>
<dbReference type="EMBL" id="AL832925">
    <property type="protein sequence ID" value="CAH10620.1"/>
    <property type="molecule type" value="mRNA"/>
</dbReference>
<dbReference type="CCDS" id="CCDS7642.1"/>
<dbReference type="RefSeq" id="NP_060050.2">
    <property type="nucleotide sequence ID" value="NM_017580.3"/>
</dbReference>
<dbReference type="RefSeq" id="XP_005269983.1">
    <property type="nucleotide sequence ID" value="XM_005269926.4"/>
</dbReference>
<dbReference type="RefSeq" id="XP_016871846.1">
    <property type="nucleotide sequence ID" value="XM_017016357.1"/>
</dbReference>
<dbReference type="RefSeq" id="XP_047281339.1">
    <property type="nucleotide sequence ID" value="XM_047425383.1"/>
</dbReference>
<dbReference type="RefSeq" id="XP_047281340.1">
    <property type="nucleotide sequence ID" value="XM_047425384.1"/>
</dbReference>
<dbReference type="RefSeq" id="XP_047281341.1">
    <property type="nucleotide sequence ID" value="XM_047425385.1"/>
</dbReference>
<dbReference type="PDB" id="3ZRH">
    <property type="method" value="X-ray"/>
    <property type="resolution" value="2.23 A"/>
    <property type="chains" value="A=245-697"/>
</dbReference>
<dbReference type="PDB" id="5AF6">
    <property type="method" value="X-ray"/>
    <property type="resolution" value="3.40 A"/>
    <property type="chains" value="F/G/H/I/J=1-33"/>
</dbReference>
<dbReference type="PDBsum" id="3ZRH"/>
<dbReference type="PDBsum" id="5AF6"/>
<dbReference type="SMR" id="Q9UGI0"/>
<dbReference type="BioGRID" id="120139">
    <property type="interactions" value="4168"/>
</dbReference>
<dbReference type="DIP" id="DIP-33806N"/>
<dbReference type="FunCoup" id="Q9UGI0">
    <property type="interactions" value="1219"/>
</dbReference>
<dbReference type="IntAct" id="Q9UGI0">
    <property type="interactions" value="169"/>
</dbReference>
<dbReference type="MINT" id="Q9UGI0"/>
<dbReference type="STRING" id="9606.ENSP00000352676"/>
<dbReference type="MEROPS" id="C64.004"/>
<dbReference type="iPTMnet" id="Q9UGI0"/>
<dbReference type="PhosphoSitePlus" id="Q9UGI0"/>
<dbReference type="BioMuta" id="ZRANB1"/>
<dbReference type="DMDM" id="212276487"/>
<dbReference type="jPOST" id="Q9UGI0"/>
<dbReference type="MassIVE" id="Q9UGI0"/>
<dbReference type="PaxDb" id="9606-ENSP00000352676"/>
<dbReference type="PeptideAtlas" id="Q9UGI0"/>
<dbReference type="ProteomicsDB" id="84215"/>
<dbReference type="Antibodypedia" id="35158">
    <property type="antibodies" value="164 antibodies from 26 providers"/>
</dbReference>
<dbReference type="DNASU" id="54764"/>
<dbReference type="Ensembl" id="ENST00000359653.4">
    <property type="protein sequence ID" value="ENSP00000352676.4"/>
    <property type="gene ID" value="ENSG00000019995.6"/>
</dbReference>
<dbReference type="GeneID" id="54764"/>
<dbReference type="KEGG" id="hsa:54764"/>
<dbReference type="MANE-Select" id="ENST00000359653.4">
    <property type="protein sequence ID" value="ENSP00000352676.4"/>
    <property type="RefSeq nucleotide sequence ID" value="NM_017580.3"/>
    <property type="RefSeq protein sequence ID" value="NP_060050.2"/>
</dbReference>
<dbReference type="UCSC" id="uc001lic.4">
    <property type="organism name" value="human"/>
</dbReference>
<dbReference type="AGR" id="HGNC:18224"/>
<dbReference type="CTD" id="54764"/>
<dbReference type="DisGeNET" id="54764"/>
<dbReference type="GeneCards" id="ZRANB1"/>
<dbReference type="HGNC" id="HGNC:18224">
    <property type="gene designation" value="ZRANB1"/>
</dbReference>
<dbReference type="HPA" id="ENSG00000019995">
    <property type="expression patterns" value="Low tissue specificity"/>
</dbReference>
<dbReference type="MIM" id="611749">
    <property type="type" value="gene"/>
</dbReference>
<dbReference type="neXtProt" id="NX_Q9UGI0"/>
<dbReference type="OpenTargets" id="ENSG00000019995"/>
<dbReference type="PharmGKB" id="PA134933584"/>
<dbReference type="VEuPathDB" id="HostDB:ENSG00000019995"/>
<dbReference type="eggNOG" id="KOG4345">
    <property type="taxonomic scope" value="Eukaryota"/>
</dbReference>
<dbReference type="GeneTree" id="ENSGT00940000158045"/>
<dbReference type="HOGENOM" id="CLU_013907_0_0_1"/>
<dbReference type="InParanoid" id="Q9UGI0"/>
<dbReference type="OMA" id="MCDTKDD"/>
<dbReference type="OrthoDB" id="6275030at2759"/>
<dbReference type="PAN-GO" id="Q9UGI0">
    <property type="GO annotations" value="10 GO annotations based on evolutionary models"/>
</dbReference>
<dbReference type="PhylomeDB" id="Q9UGI0"/>
<dbReference type="TreeFam" id="TF323312"/>
<dbReference type="PathwayCommons" id="Q9UGI0"/>
<dbReference type="Reactome" id="R-HSA-195253">
    <property type="pathway name" value="Degradation of beta-catenin by the destruction complex"/>
</dbReference>
<dbReference type="Reactome" id="R-HSA-5689896">
    <property type="pathway name" value="Ovarian tumor domain proteases"/>
</dbReference>
<dbReference type="SignaLink" id="Q9UGI0"/>
<dbReference type="SIGNOR" id="Q9UGI0"/>
<dbReference type="BioGRID-ORCS" id="54764">
    <property type="hits" value="38 hits in 1200 CRISPR screens"/>
</dbReference>
<dbReference type="ChiTaRS" id="ZRANB1">
    <property type="organism name" value="human"/>
</dbReference>
<dbReference type="EvolutionaryTrace" id="Q9UGI0"/>
<dbReference type="GenomeRNAi" id="54764"/>
<dbReference type="Pharos" id="Q9UGI0">
    <property type="development level" value="Tbio"/>
</dbReference>
<dbReference type="PRO" id="PR:Q9UGI0"/>
<dbReference type="Proteomes" id="UP000005640">
    <property type="component" value="Chromosome 10"/>
</dbReference>
<dbReference type="RNAct" id="Q9UGI0">
    <property type="molecule type" value="protein"/>
</dbReference>
<dbReference type="Bgee" id="ENSG00000019995">
    <property type="expression patterns" value="Expressed in tibialis anterior and 191 other cell types or tissues"/>
</dbReference>
<dbReference type="GO" id="GO:0005737">
    <property type="term" value="C:cytoplasm"/>
    <property type="evidence" value="ECO:0000314"/>
    <property type="project" value="UniProtKB"/>
</dbReference>
<dbReference type="GO" id="GO:0005829">
    <property type="term" value="C:cytosol"/>
    <property type="evidence" value="ECO:0000314"/>
    <property type="project" value="HPA"/>
</dbReference>
<dbReference type="GO" id="GO:0043231">
    <property type="term" value="C:intracellular membrane-bounded organelle"/>
    <property type="evidence" value="ECO:0000314"/>
    <property type="project" value="HPA"/>
</dbReference>
<dbReference type="GO" id="GO:0005654">
    <property type="term" value="C:nucleoplasm"/>
    <property type="evidence" value="ECO:0000314"/>
    <property type="project" value="HPA"/>
</dbReference>
<dbReference type="GO" id="GO:0005634">
    <property type="term" value="C:nucleus"/>
    <property type="evidence" value="ECO:0000314"/>
    <property type="project" value="UniProtKB"/>
</dbReference>
<dbReference type="GO" id="GO:0004843">
    <property type="term" value="F:cysteine-type deubiquitinase activity"/>
    <property type="evidence" value="ECO:0000314"/>
    <property type="project" value="UniProtKB"/>
</dbReference>
<dbReference type="GO" id="GO:0101005">
    <property type="term" value="F:deubiquitinase activity"/>
    <property type="evidence" value="ECO:0000314"/>
    <property type="project" value="UniProtKB"/>
</dbReference>
<dbReference type="GO" id="GO:0070530">
    <property type="term" value="F:K63-linked polyubiquitin modification-dependent protein binding"/>
    <property type="evidence" value="ECO:0000314"/>
    <property type="project" value="BHF-UCL"/>
</dbReference>
<dbReference type="GO" id="GO:0031593">
    <property type="term" value="F:polyubiquitin modification-dependent protein binding"/>
    <property type="evidence" value="ECO:0000314"/>
    <property type="project" value="UniProtKB"/>
</dbReference>
<dbReference type="GO" id="GO:0008270">
    <property type="term" value="F:zinc ion binding"/>
    <property type="evidence" value="ECO:0007669"/>
    <property type="project" value="UniProtKB-KW"/>
</dbReference>
<dbReference type="GO" id="GO:0016477">
    <property type="term" value="P:cell migration"/>
    <property type="evidence" value="ECO:0000315"/>
    <property type="project" value="UniProtKB"/>
</dbReference>
<dbReference type="GO" id="GO:0007010">
    <property type="term" value="P:cytoskeleton organization"/>
    <property type="evidence" value="ECO:0000315"/>
    <property type="project" value="UniProtKB"/>
</dbReference>
<dbReference type="GO" id="GO:0030177">
    <property type="term" value="P:positive regulation of Wnt signaling pathway"/>
    <property type="evidence" value="ECO:0000315"/>
    <property type="project" value="UniProtKB"/>
</dbReference>
<dbReference type="GO" id="GO:0016579">
    <property type="term" value="P:protein deubiquitination"/>
    <property type="evidence" value="ECO:0000314"/>
    <property type="project" value="UniProt"/>
</dbReference>
<dbReference type="GO" id="GO:0071947">
    <property type="term" value="P:protein deubiquitination involved in ubiquitin-dependent protein catabolic process"/>
    <property type="evidence" value="ECO:0000315"/>
    <property type="project" value="BHF-UCL"/>
</dbReference>
<dbReference type="GO" id="GO:0035523">
    <property type="term" value="P:protein K29-linked deubiquitination"/>
    <property type="evidence" value="ECO:0000314"/>
    <property type="project" value="UniProtKB"/>
</dbReference>
<dbReference type="GO" id="GO:1990168">
    <property type="term" value="P:protein K33-linked deubiquitination"/>
    <property type="evidence" value="ECO:0000314"/>
    <property type="project" value="UniProtKB"/>
</dbReference>
<dbReference type="GO" id="GO:0070536">
    <property type="term" value="P:protein K63-linked deubiquitination"/>
    <property type="evidence" value="ECO:0000314"/>
    <property type="project" value="UniProtKB"/>
</dbReference>
<dbReference type="GO" id="GO:0022604">
    <property type="term" value="P:regulation of cell morphogenesis"/>
    <property type="evidence" value="ECO:0000315"/>
    <property type="project" value="UniProtKB"/>
</dbReference>
<dbReference type="GO" id="GO:0016055">
    <property type="term" value="P:Wnt signaling pathway"/>
    <property type="evidence" value="ECO:0007669"/>
    <property type="project" value="UniProtKB-KW"/>
</dbReference>
<dbReference type="CDD" id="cd22767">
    <property type="entry name" value="OTU_ZRANB1"/>
    <property type="match status" value="1"/>
</dbReference>
<dbReference type="FunFam" id="1.25.40.560:FF:000001">
    <property type="entry name" value="ubiquitin thioesterase ZRANB1 isoform X1"/>
    <property type="match status" value="1"/>
</dbReference>
<dbReference type="FunFam" id="4.10.1060.10:FF:000006">
    <property type="entry name" value="ubiquitin thioesterase ZRANB1 isoform X1"/>
    <property type="match status" value="1"/>
</dbReference>
<dbReference type="FunFam" id="4.10.1060.10:FF:000011">
    <property type="entry name" value="ubiquitin thioesterase ZRANB1 isoform X1"/>
    <property type="match status" value="1"/>
</dbReference>
<dbReference type="FunFam" id="4.10.1060.10:FF:000012">
    <property type="entry name" value="ubiquitin thioesterase ZRANB1 isoform X1"/>
    <property type="match status" value="1"/>
</dbReference>
<dbReference type="Gene3D" id="1.25.40.560">
    <property type="match status" value="1"/>
</dbReference>
<dbReference type="Gene3D" id="4.10.1060.10">
    <property type="entry name" value="Zinc finger, RanBP2-type"/>
    <property type="match status" value="3"/>
</dbReference>
<dbReference type="InterPro" id="IPR041294">
    <property type="entry name" value="AnkUBD"/>
</dbReference>
<dbReference type="InterPro" id="IPR051346">
    <property type="entry name" value="OTU_Deubiquitinase"/>
</dbReference>
<dbReference type="InterPro" id="IPR003323">
    <property type="entry name" value="OTU_dom"/>
</dbReference>
<dbReference type="InterPro" id="IPR001876">
    <property type="entry name" value="Znf_RanBP2"/>
</dbReference>
<dbReference type="InterPro" id="IPR036443">
    <property type="entry name" value="Znf_RanBP2_sf"/>
</dbReference>
<dbReference type="InterPro" id="IPR049768">
    <property type="entry name" value="ZRANB1_OTU"/>
</dbReference>
<dbReference type="PANTHER" id="PTHR13367">
    <property type="entry name" value="UBIQUITIN THIOESTERASE"/>
    <property type="match status" value="1"/>
</dbReference>
<dbReference type="PANTHER" id="PTHR13367:SF28">
    <property type="entry name" value="UBIQUITIN THIOESTERASE ZRANB1"/>
    <property type="match status" value="1"/>
</dbReference>
<dbReference type="Pfam" id="PF18418">
    <property type="entry name" value="AnkUBD"/>
    <property type="match status" value="1"/>
</dbReference>
<dbReference type="Pfam" id="PF02338">
    <property type="entry name" value="OTU"/>
    <property type="match status" value="1"/>
</dbReference>
<dbReference type="Pfam" id="PF00641">
    <property type="entry name" value="Zn_ribbon_RanBP"/>
    <property type="match status" value="2"/>
</dbReference>
<dbReference type="SMART" id="SM00547">
    <property type="entry name" value="ZnF_RBZ"/>
    <property type="match status" value="3"/>
</dbReference>
<dbReference type="SUPFAM" id="SSF90209">
    <property type="entry name" value="Ran binding protein zinc finger-like"/>
    <property type="match status" value="2"/>
</dbReference>
<dbReference type="PROSITE" id="PS50802">
    <property type="entry name" value="OTU"/>
    <property type="match status" value="1"/>
</dbReference>
<dbReference type="PROSITE" id="PS01358">
    <property type="entry name" value="ZF_RANBP2_1"/>
    <property type="match status" value="3"/>
</dbReference>
<dbReference type="PROSITE" id="PS50199">
    <property type="entry name" value="ZF_RANBP2_2"/>
    <property type="match status" value="3"/>
</dbReference>
<comment type="function">
    <text evidence="6 7 8 9 10 11 12">Ubiquitin thioesterase, which specifically hydrolyzes 'Lys-29'-linked and 'Lys-33'-linked diubiquitin (PubMed:22157957, PubMed:23827681, PubMed:25752573, PubMed:25752577). Also cleaves 'Lys-63'-linked chains, but with 40-fold less efficiency compared to 'Lys-29'-linked ones (PubMed:18281465). Positive regulator of the Wnt signaling pathway that deubiquitinates APC protein, a negative regulator of Wnt-mediated transcription (PubMed:18281465). Acts as a regulator of autophagy by mediating deubiquitination of PIK3C3/VPS34, thereby promoting autophagosome maturation (PubMed:33637724). Plays a role in the regulation of cell morphology and cytoskeletal organization (PubMed:21834987). Required in the stress fiber dynamics and cell migration (PubMed:21834987).</text>
</comment>
<comment type="catalytic activity">
    <reaction evidence="9 10 11 12">
        <text>Thiol-dependent hydrolysis of ester, thioester, amide, peptide and isopeptide bonds formed by the C-terminal Gly of ubiquitin (a 76-residue protein attached to proteins as an intracellular targeting signal).</text>
        <dbReference type="EC" id="3.4.19.12"/>
    </reaction>
</comment>
<comment type="subunit">
    <text evidence="5 6">Interacts with TRAF6 (PubMed:11463333). Interacts with APC (PubMed:18281465).</text>
</comment>
<comment type="interaction">
    <interactant intactId="EBI-527853">
        <id>Q9UGI0</id>
    </interactant>
    <interactant intactId="EBI-17183751">
        <id>X5D778</id>
        <label>ANKRD11</label>
    </interactant>
    <organismsDiffer>false</organismsDiffer>
    <experiments>3</experiments>
</comment>
<comment type="interaction">
    <interactant intactId="EBI-527853">
        <id>Q9UGI0</id>
    </interactant>
    <interactant intactId="EBI-541426">
        <id>Q9BXS5</id>
        <label>AP1M1</label>
    </interactant>
    <organismsDiffer>false</organismsDiffer>
    <experiments>3</experiments>
</comment>
<comment type="interaction">
    <interactant intactId="EBI-527853">
        <id>Q9UGI0</id>
    </interactant>
    <interactant intactId="EBI-602199">
        <id>Q12774</id>
        <label>ARHGEF5</label>
    </interactant>
    <organismsDiffer>false</organismsDiffer>
    <experiments>3</experiments>
</comment>
<comment type="interaction">
    <interactant intactId="EBI-527853">
        <id>Q9UGI0</id>
    </interactant>
    <interactant intactId="EBI-12191751">
        <id>Q8TBH0</id>
        <label>ARRDC2</label>
    </interactant>
    <organismsDiffer>false</organismsDiffer>
    <experiments>3</experiments>
</comment>
<comment type="interaction">
    <interactant intactId="EBI-527853">
        <id>Q9UGI0</id>
    </interactant>
    <interactant intactId="EBI-2875665">
        <id>Q96B67</id>
        <label>ARRDC3</label>
    </interactant>
    <organismsDiffer>false</organismsDiffer>
    <experiments>3</experiments>
</comment>
<comment type="interaction">
    <interactant intactId="EBI-527853">
        <id>Q9UGI0</id>
    </interactant>
    <interactant intactId="EBI-745689">
        <id>Q7L5A3</id>
        <label>ATOSB</label>
    </interactant>
    <organismsDiffer>false</organismsDiffer>
    <experiments>3</experiments>
</comment>
<comment type="interaction">
    <interactant intactId="EBI-527853">
        <id>Q9UGI0</id>
    </interactant>
    <interactant intactId="EBI-742750">
        <id>Q8TBE0</id>
        <label>BAHD1</label>
    </interactant>
    <organismsDiffer>false</organismsDiffer>
    <experiments>3</experiments>
</comment>
<comment type="interaction">
    <interactant intactId="EBI-527853">
        <id>Q9UGI0</id>
    </interactant>
    <interactant intactId="EBI-714754">
        <id>O95696</id>
        <label>BRD1</label>
    </interactant>
    <organismsDiffer>false</organismsDiffer>
    <experiments>3</experiments>
</comment>
<comment type="interaction">
    <interactant intactId="EBI-527853">
        <id>Q9UGI0</id>
    </interactant>
    <interactant intactId="EBI-358049">
        <id>Q13895</id>
        <label>BYSL</label>
    </interactant>
    <organismsDiffer>false</organismsDiffer>
    <experiments>3</experiments>
</comment>
<comment type="interaction">
    <interactant intactId="EBI-527853">
        <id>Q9UGI0</id>
    </interactant>
    <interactant intactId="EBI-11530605">
        <id>Q9H257-2</id>
        <label>CARD9</label>
    </interactant>
    <organismsDiffer>false</organismsDiffer>
    <experiments>3</experiments>
</comment>
<comment type="interaction">
    <interactant intactId="EBI-527853">
        <id>Q9UGI0</id>
    </interactant>
    <interactant intactId="EBI-3923843">
        <id>O95931</id>
        <label>CBX7</label>
    </interactant>
    <organismsDiffer>false</organismsDiffer>
    <experiments>3</experiments>
</comment>
<comment type="interaction">
    <interactant intactId="EBI-527853">
        <id>Q9UGI0</id>
    </interactant>
    <interactant intactId="EBI-712912">
        <id>Q9HC52</id>
        <label>CBX8</label>
    </interactant>
    <organismsDiffer>false</organismsDiffer>
    <experiments>3</experiments>
</comment>
<comment type="interaction">
    <interactant intactId="EBI-527853">
        <id>Q9UGI0</id>
    </interactant>
    <interactant intactId="EBI-744556">
        <id>Q96HB5</id>
        <label>CCDC120</label>
    </interactant>
    <organismsDiffer>false</organismsDiffer>
    <experiments>3</experiments>
</comment>
<comment type="interaction">
    <interactant intactId="EBI-527853">
        <id>Q9UGI0</id>
    </interactant>
    <interactant intactId="EBI-10961312">
        <id>Q8IYE1</id>
        <label>CCDC13</label>
    </interactant>
    <organismsDiffer>false</organismsDiffer>
    <experiments>3</experiments>
</comment>
<comment type="interaction">
    <interactant intactId="EBI-527853">
        <id>Q9UGI0</id>
    </interactant>
    <interactant intactId="EBI-740814">
        <id>Q8N715</id>
        <label>CCDC185</label>
    </interactant>
    <organismsDiffer>false</organismsDiffer>
    <experiments>3</experiments>
</comment>
<comment type="interaction">
    <interactant intactId="EBI-527853">
        <id>Q9UGI0</id>
    </interactant>
    <interactant intactId="EBI-2836773">
        <id>Q9UK58</id>
        <label>CCNL1</label>
    </interactant>
    <organismsDiffer>false</organismsDiffer>
    <experiments>3</experiments>
</comment>
<comment type="interaction">
    <interactant intactId="EBI-527853">
        <id>Q9UGI0</id>
    </interactant>
    <interactant intactId="EBI-374969">
        <id>O75419</id>
        <label>CDC45</label>
    </interactant>
    <organismsDiffer>false</organismsDiffer>
    <experiments>3</experiments>
</comment>
<comment type="interaction">
    <interactant intactId="EBI-527853">
        <id>Q9UGI0</id>
    </interactant>
    <interactant intactId="EBI-374880">
        <id>Q99459</id>
        <label>CDC5L</label>
    </interactant>
    <organismsDiffer>false</organismsDiffer>
    <experiments>3</experiments>
</comment>
<comment type="interaction">
    <interactant intactId="EBI-527853">
        <id>Q9UGI0</id>
    </interactant>
    <interactant intactId="EBI-746238">
        <id>Q07002</id>
        <label>CDK18</label>
    </interactant>
    <organismsDiffer>false</organismsDiffer>
    <experiments>3</experiments>
</comment>
<comment type="interaction">
    <interactant intactId="EBI-527853">
        <id>Q9UGI0</id>
    </interactant>
    <interactant intactId="EBI-3919850">
        <id>Q8IVW4</id>
        <label>CDKL3</label>
    </interactant>
    <organismsDiffer>false</organismsDiffer>
    <experiments>3</experiments>
</comment>
<comment type="interaction">
    <interactant intactId="EBI-527853">
        <id>Q9UGI0</id>
    </interactant>
    <interactant intactId="EBI-741032">
        <id>Q8NE01</id>
        <label>CNNM3</label>
    </interactant>
    <organismsDiffer>false</organismsDiffer>
    <experiments>3</experiments>
</comment>
<comment type="interaction">
    <interactant intactId="EBI-527853">
        <id>Q9UGI0</id>
    </interactant>
    <interactant intactId="EBI-12012272">
        <id>Q9UBL6-2</id>
        <label>CPNE7</label>
    </interactant>
    <organismsDiffer>false</organismsDiffer>
    <experiments>3</experiments>
</comment>
<comment type="interaction">
    <interactant intactId="EBI-527853">
        <id>Q9UGI0</id>
    </interactant>
    <interactant intactId="EBI-5453285">
        <id>Q2TBE0</id>
        <label>CWF19L2</label>
    </interactant>
    <organismsDiffer>false</organismsDiffer>
    <experiments>3</experiments>
</comment>
<comment type="interaction">
    <interactant intactId="EBI-527853">
        <id>Q9UGI0</id>
    </interactant>
    <interactant intactId="EBI-14148644">
        <id>O43602-2</id>
        <label>DCX</label>
    </interactant>
    <organismsDiffer>false</organismsDiffer>
    <experiments>3</experiments>
</comment>
<comment type="interaction">
    <interactant intactId="EBI-527853">
        <id>Q9UGI0</id>
    </interactant>
    <interactant intactId="EBI-351257">
        <id>P26196</id>
        <label>DDX6</label>
    </interactant>
    <organismsDiffer>false</organismsDiffer>
    <experiments>3</experiments>
</comment>
<comment type="interaction">
    <interactant intactId="EBI-527853">
        <id>Q9UGI0</id>
    </interactant>
    <interactant intactId="EBI-11514233">
        <id>P59910</id>
        <label>DNAJB13</label>
    </interactant>
    <organismsDiffer>false</organismsDiffer>
    <experiments>3</experiments>
</comment>
<comment type="interaction">
    <interactant intactId="EBI-527853">
        <id>Q9UGI0</id>
    </interactant>
    <interactant intactId="EBI-11984733">
        <id>O60941-5</id>
        <label>DTNB</label>
    </interactant>
    <organismsDiffer>false</organismsDiffer>
    <experiments>3</experiments>
</comment>
<comment type="interaction">
    <interactant intactId="EBI-527853">
        <id>Q9UGI0</id>
    </interactant>
    <interactant intactId="EBI-749800">
        <id>Q9UII6</id>
        <label>DUSP13B</label>
    </interactant>
    <organismsDiffer>false</organismsDiffer>
    <experiments>3</experiments>
</comment>
<comment type="interaction">
    <interactant intactId="EBI-527853">
        <id>Q9UGI0</id>
    </interactant>
    <interactant intactId="EBI-2339219">
        <id>Q08426</id>
        <label>EHHADH</label>
    </interactant>
    <organismsDiffer>false</organismsDiffer>
    <experiments>3</experiments>
</comment>
<comment type="interaction">
    <interactant intactId="EBI-527853">
        <id>Q9UGI0</id>
    </interactant>
    <interactant intactId="EBI-353818">
        <id>O15371</id>
        <label>EIF3D</label>
    </interactant>
    <organismsDiffer>false</organismsDiffer>
    <experiments>3</experiments>
</comment>
<comment type="interaction">
    <interactant intactId="EBI-527853">
        <id>Q9UGI0</id>
    </interactant>
    <interactant intactId="EBI-744099">
        <id>Q9H0I2</id>
        <label>ENKD1</label>
    </interactant>
    <organismsDiffer>false</organismsDiffer>
    <experiments>3</experiments>
</comment>
<comment type="interaction">
    <interactant intactId="EBI-527853">
        <id>Q9UGI0</id>
    </interactant>
    <interactant intactId="EBI-8465203">
        <id>P50548</id>
        <label>ERF</label>
    </interactant>
    <organismsDiffer>false</organismsDiffer>
    <experiments>3</experiments>
</comment>
<comment type="interaction">
    <interactant intactId="EBI-527853">
        <id>Q9UGI0</id>
    </interactant>
    <interactant intactId="EBI-12039347">
        <id>Q9NVQ4-2</id>
        <label>FAIM</label>
    </interactant>
    <organismsDiffer>false</organismsDiffer>
    <experiments>3</experiments>
</comment>
<comment type="interaction">
    <interactant intactId="EBI-527853">
        <id>Q9UGI0</id>
    </interactant>
    <interactant intactId="EBI-11986315">
        <id>Q9H5Z6-2</id>
        <label>FAM124B</label>
    </interactant>
    <organismsDiffer>false</organismsDiffer>
    <experiments>3</experiments>
</comment>
<comment type="interaction">
    <interactant intactId="EBI-527853">
        <id>Q9UGI0</id>
    </interactant>
    <interactant intactId="EBI-719941">
        <id>Q3B820</id>
        <label>FAM161A</label>
    </interactant>
    <organismsDiffer>false</organismsDiffer>
    <experiments>3</experiments>
</comment>
<comment type="interaction">
    <interactant intactId="EBI-527853">
        <id>Q9UGI0</id>
    </interactant>
    <interactant intactId="EBI-7225287">
        <id>Q96MY7</id>
        <label>FAM161B</label>
    </interactant>
    <organismsDiffer>false</organismsDiffer>
    <experiments>3</experiments>
</comment>
<comment type="interaction">
    <interactant intactId="EBI-527853">
        <id>Q9UGI0</id>
    </interactant>
    <interactant intactId="EBI-742802">
        <id>Q9Y247</id>
        <label>FAM50B</label>
    </interactant>
    <organismsDiffer>false</organismsDiffer>
    <experiments>3</experiments>
</comment>
<comment type="interaction">
    <interactant intactId="EBI-527853">
        <id>Q9UGI0</id>
    </interactant>
    <interactant intactId="EBI-2513774">
        <id>O95363</id>
        <label>FARS2</label>
    </interactant>
    <organismsDiffer>false</organismsDiffer>
    <experiments>3</experiments>
</comment>
<comment type="interaction">
    <interactant intactId="EBI-527853">
        <id>Q9UGI0</id>
    </interactant>
    <interactant intactId="EBI-744935">
        <id>Q9BVV2</id>
        <label>FNDC11</label>
    </interactant>
    <organismsDiffer>false</organismsDiffer>
    <experiments>3</experiments>
</comment>
<comment type="interaction">
    <interactant intactId="EBI-527853">
        <id>Q9UGI0</id>
    </interactant>
    <interactant intactId="EBI-372506">
        <id>Q8TAE8</id>
        <label>GADD45GIP1</label>
    </interactant>
    <organismsDiffer>false</organismsDiffer>
    <experiments>3</experiments>
</comment>
<comment type="interaction">
    <interactant intactId="EBI-527853">
        <id>Q9UGI0</id>
    </interactant>
    <interactant intactId="EBI-7960826">
        <id>Q8NHY3</id>
        <label>GAS2L2</label>
    </interactant>
    <organismsDiffer>false</organismsDiffer>
    <experiments>3</experiments>
</comment>
<comment type="interaction">
    <interactant intactId="EBI-527853">
        <id>Q9UGI0</id>
    </interactant>
    <interactant intactId="EBI-744104">
        <id>P55040</id>
        <label>GEM</label>
    </interactant>
    <organismsDiffer>false</organismsDiffer>
    <experiments>3</experiments>
</comment>
<comment type="interaction">
    <interactant intactId="EBI-527853">
        <id>Q9UGI0</id>
    </interactant>
    <interactant intactId="EBI-7251368">
        <id>Q9BZE0</id>
        <label>GLIS2</label>
    </interactant>
    <organismsDiffer>false</organismsDiffer>
    <experiments>3</experiments>
</comment>
<comment type="interaction">
    <interactant intactId="EBI-527853">
        <id>Q9UGI0</id>
    </interactant>
    <interactant intactId="EBI-751540">
        <id>O95872</id>
        <label>GPANK1</label>
    </interactant>
    <organismsDiffer>false</organismsDiffer>
    <experiments>3</experiments>
</comment>
<comment type="interaction">
    <interactant intactId="EBI-527853">
        <id>Q9UGI0</id>
    </interactant>
    <interactant intactId="EBI-746309">
        <id>Q92917</id>
        <label>GPKOW</label>
    </interactant>
    <organismsDiffer>false</organismsDiffer>
    <experiments>3</experiments>
</comment>
<comment type="interaction">
    <interactant intactId="EBI-527853">
        <id>Q9UGI0</id>
    </interactant>
    <interactant intactId="EBI-3893317">
        <id>P09067</id>
        <label>HOXB5</label>
    </interactant>
    <organismsDiffer>false</organismsDiffer>
    <experiments>3</experiments>
</comment>
<comment type="interaction">
    <interactant intactId="EBI-527853">
        <id>Q9UGI0</id>
    </interactant>
    <interactant intactId="EBI-1752118">
        <id>P31273</id>
        <label>HOXC8</label>
    </interactant>
    <organismsDiffer>false</organismsDiffer>
    <experiments>3</experiments>
</comment>
<comment type="interaction">
    <interactant intactId="EBI-527853">
        <id>Q9UGI0</id>
    </interactant>
    <interactant intactId="EBI-17178971">
        <id>Q14005-2</id>
        <label>IL16</label>
    </interactant>
    <organismsDiffer>false</organismsDiffer>
    <experiments>3</experiments>
</comment>
<comment type="interaction">
    <interactant intactId="EBI-527853">
        <id>Q9UGI0</id>
    </interactant>
    <interactant intactId="EBI-715611">
        <id>Q9C086</id>
        <label>INO80B</label>
    </interactant>
    <organismsDiffer>false</organismsDiffer>
    <experiments>3</experiments>
</comment>
<comment type="interaction">
    <interactant intactId="EBI-527853">
        <id>Q9UGI0</id>
    </interactant>
    <interactant intactId="EBI-10990676">
        <id>Q96PC2</id>
        <label>IP6K3</label>
    </interactant>
    <organismsDiffer>false</organismsDiffer>
    <experiments>3</experiments>
</comment>
<comment type="interaction">
    <interactant intactId="EBI-527853">
        <id>Q9UGI0</id>
    </interactant>
    <interactant intactId="EBI-10220600">
        <id>Q8NA54</id>
        <label>IQUB</label>
    </interactant>
    <organismsDiffer>false</organismsDiffer>
    <experiments>3</experiments>
</comment>
<comment type="interaction">
    <interactant intactId="EBI-527853">
        <id>Q9UGI0</id>
    </interactant>
    <interactant intactId="EBI-17181882">
        <id>O75564-2</id>
        <label>JRK</label>
    </interactant>
    <organismsDiffer>false</organismsDiffer>
    <experiments>3</experiments>
</comment>
<comment type="interaction">
    <interactant intactId="EBI-527853">
        <id>Q9UGI0</id>
    </interactant>
    <interactant intactId="EBI-2556193">
        <id>Q63ZY3</id>
        <label>KANK2</label>
    </interactant>
    <organismsDiffer>false</organismsDiffer>
    <experiments>3</experiments>
</comment>
<comment type="interaction">
    <interactant intactId="EBI-527853">
        <id>Q9UGI0</id>
    </interactant>
    <interactant intactId="EBI-8472129">
        <id>Q9HAQ2</id>
        <label>KIF9</label>
    </interactant>
    <organismsDiffer>false</organismsDiffer>
    <experiments>3</experiments>
</comment>
<comment type="interaction">
    <interactant intactId="EBI-527853">
        <id>Q9UGI0</id>
    </interactant>
    <interactant intactId="EBI-14069005">
        <id>Q9BVG8-5</id>
        <label>KIFC3</label>
    </interactant>
    <organismsDiffer>false</organismsDiffer>
    <experiments>3</experiments>
</comment>
<comment type="interaction">
    <interactant intactId="EBI-527853">
        <id>Q9UGI0</id>
    </interactant>
    <interactant intactId="EBI-726510">
        <id>Q96BZ8</id>
        <label>LENG1</label>
    </interactant>
    <organismsDiffer>false</organismsDiffer>
    <experiments>3</experiments>
</comment>
<comment type="interaction">
    <interactant intactId="EBI-527853">
        <id>Q9UGI0</id>
    </interactant>
    <interactant intactId="EBI-11742507">
        <id>Q8TAP4-4</id>
        <label>LMO3</label>
    </interactant>
    <organismsDiffer>false</organismsDiffer>
    <experiments>3</experiments>
</comment>
<comment type="interaction">
    <interactant intactId="EBI-527853">
        <id>Q9UGI0</id>
    </interactant>
    <interactant intactId="EBI-739832">
        <id>Q8TBB1</id>
        <label>LNX1</label>
    </interactant>
    <organismsDiffer>false</organismsDiffer>
    <experiments>3</experiments>
</comment>
<comment type="interaction">
    <interactant intactId="EBI-527853">
        <id>Q9UGI0</id>
    </interactant>
    <interactant intactId="EBI-751857">
        <id>O15481</id>
        <label>MAGEB4</label>
    </interactant>
    <organismsDiffer>false</organismsDiffer>
    <experiments>3</experiments>
</comment>
<comment type="interaction">
    <interactant intactId="EBI-527853">
        <id>Q9UGI0</id>
    </interactant>
    <interactant intactId="EBI-299134">
        <id>P61326</id>
        <label>MAGOH</label>
    </interactant>
    <organismsDiffer>false</organismsDiffer>
    <experiments>3</experiments>
</comment>
<comment type="interaction">
    <interactant intactId="EBI-527853">
        <id>Q9UGI0</id>
    </interactant>
    <interactant intactId="EBI-348259">
        <id>Q96EZ8</id>
        <label>MCRS1</label>
    </interactant>
    <organismsDiffer>false</organismsDiffer>
    <experiments>3</experiments>
</comment>
<comment type="interaction">
    <interactant intactId="EBI-527853">
        <id>Q9UGI0</id>
    </interactant>
    <interactant intactId="EBI-1051435">
        <id>P53582</id>
        <label>METAP1</label>
    </interactant>
    <organismsDiffer>false</organismsDiffer>
    <experiments>4</experiments>
</comment>
<comment type="interaction">
    <interactant intactId="EBI-527853">
        <id>Q9UGI0</id>
    </interactant>
    <interactant intactId="EBI-8652459">
        <id>Q8WXB1</id>
        <label>METTL21A</label>
    </interactant>
    <organismsDiffer>false</organismsDiffer>
    <experiments>3</experiments>
</comment>
<comment type="interaction">
    <interactant intactId="EBI-527853">
        <id>Q9UGI0</id>
    </interactant>
    <interactant intactId="EBI-1048159">
        <id>P55081</id>
        <label>MFAP1</label>
    </interactant>
    <organismsDiffer>false</organismsDiffer>
    <experiments>3</experiments>
</comment>
<comment type="interaction">
    <interactant intactId="EBI-527853">
        <id>Q9UGI0</id>
    </interactant>
    <interactant intactId="EBI-14086479">
        <id>Q8IVT4</id>
        <label>MGC50722</label>
    </interactant>
    <organismsDiffer>false</organismsDiffer>
    <experiments>3</experiments>
</comment>
<comment type="interaction">
    <interactant intactId="EBI-527853">
        <id>Q9UGI0</id>
    </interactant>
    <interactant intactId="EBI-10172526">
        <id>Q9UJV3-2</id>
        <label>MID2</label>
    </interactant>
    <organismsDiffer>false</organismsDiffer>
    <experiments>3</experiments>
</comment>
<comment type="interaction">
    <interactant intactId="EBI-527853">
        <id>Q9UGI0</id>
    </interactant>
    <interactant intactId="EBI-742459">
        <id>Q9BU76</id>
        <label>MMTAG2</label>
    </interactant>
    <organismsDiffer>false</organismsDiffer>
    <experiments>3</experiments>
</comment>
<comment type="interaction">
    <interactant intactId="EBI-527853">
        <id>Q9UGI0</id>
    </interactant>
    <interactant intactId="EBI-12183511">
        <id>O15442-2</id>
        <label>MPPED1</label>
    </interactant>
    <organismsDiffer>false</organismsDiffer>
    <experiments>3</experiments>
</comment>
<comment type="interaction">
    <interactant intactId="EBI-527853">
        <id>Q9UGI0</id>
    </interactant>
    <interactant intactId="EBI-10318831">
        <id>Q9P2K5-2</id>
        <label>MYEF2</label>
    </interactant>
    <organismsDiffer>false</organismsDiffer>
    <experiments>3</experiments>
</comment>
<comment type="interaction">
    <interactant intactId="EBI-527853">
        <id>Q9UGI0</id>
    </interactant>
    <interactant intactId="EBI-11750983">
        <id>Q9HC98-4</id>
        <label>NEK6</label>
    </interactant>
    <organismsDiffer>false</organismsDiffer>
    <experiments>3</experiments>
</comment>
<comment type="interaction">
    <interactant intactId="EBI-527853">
        <id>Q9UGI0</id>
    </interactant>
    <interactant intactId="EBI-2949792">
        <id>Q9BRJ7</id>
        <label>NUDT16L1</label>
    </interactant>
    <organismsDiffer>false</organismsDiffer>
    <experiments>3</experiments>
</comment>
<comment type="interaction">
    <interactant intactId="EBI-527853">
        <id>Q9UGI0</id>
    </interactant>
    <interactant intactId="EBI-355720">
        <id>O43809</id>
        <label>NUDT21</label>
    </interactant>
    <organismsDiffer>false</organismsDiffer>
    <experiments>3</experiments>
</comment>
<comment type="interaction">
    <interactant intactId="EBI-527853">
        <id>Q9UGI0</id>
    </interactant>
    <interactant intactId="EBI-750589">
        <id>P30039</id>
        <label>PBLD</label>
    </interactant>
    <organismsDiffer>false</organismsDiffer>
    <experiments>6</experiments>
</comment>
<comment type="interaction">
    <interactant intactId="EBI-527853">
        <id>Q9UGI0</id>
    </interactant>
    <interactant intactId="EBI-530034">
        <id>O43189</id>
        <label>PHF1</label>
    </interactant>
    <organismsDiffer>false</organismsDiffer>
    <experiments>3</experiments>
</comment>
<comment type="interaction">
    <interactant intactId="EBI-527853">
        <id>Q9UGI0</id>
    </interactant>
    <interactant intactId="EBI-2339674">
        <id>Q5T6S3</id>
        <label>PHF19</label>
    </interactant>
    <organismsDiffer>false</organismsDiffer>
    <experiments>3</experiments>
</comment>
<comment type="interaction">
    <interactant intactId="EBI-527853">
        <id>Q9UGI0</id>
    </interactant>
    <interactant intactId="EBI-602382">
        <id>Q16512</id>
        <label>PKN1</label>
    </interactant>
    <organismsDiffer>false</organismsDiffer>
    <experiments>3</experiments>
</comment>
<comment type="interaction">
    <interactant intactId="EBI-527853">
        <id>Q9UGI0</id>
    </interactant>
    <interactant intactId="EBI-12014286">
        <id>Q494U1-3</id>
        <label>PLEKHN1</label>
    </interactant>
    <organismsDiffer>false</organismsDiffer>
    <experiments>3</experiments>
</comment>
<comment type="interaction">
    <interactant intactId="EBI-527853">
        <id>Q9UGI0</id>
    </interactant>
    <interactant intactId="EBI-10171633">
        <id>Q96PV4</id>
        <label>PNMA5</label>
    </interactant>
    <organismsDiffer>false</organismsDiffer>
    <experiments>3</experiments>
</comment>
<comment type="interaction">
    <interactant intactId="EBI-527853">
        <id>Q9UGI0</id>
    </interactant>
    <interactant intactId="EBI-10276663">
        <id>Q8WUT1</id>
        <label>POLDIP3</label>
    </interactant>
    <organismsDiffer>false</organismsDiffer>
    <experiments>3</experiments>
</comment>
<comment type="interaction">
    <interactant intactId="EBI-527853">
        <id>Q9UGI0</id>
    </interactant>
    <interactant intactId="EBI-10320765">
        <id>Q9UGP5-2</id>
        <label>POLL</label>
    </interactant>
    <organismsDiffer>false</organismsDiffer>
    <experiments>3</experiments>
</comment>
<comment type="interaction">
    <interactant intactId="EBI-527853">
        <id>Q9UGI0</id>
    </interactant>
    <interactant intactId="EBI-1055079">
        <id>O15160</id>
        <label>POLR1C</label>
    </interactant>
    <organismsDiffer>false</organismsDiffer>
    <experiments>3</experiments>
</comment>
<comment type="interaction">
    <interactant intactId="EBI-527853">
        <id>Q9UGI0</id>
    </interactant>
    <interactant intactId="EBI-2557469">
        <id>Q6NYC8</id>
        <label>PPP1R18</label>
    </interactant>
    <organismsDiffer>false</organismsDiffer>
    <experiments>3</experiments>
</comment>
<comment type="interaction">
    <interactant intactId="EBI-527853">
        <id>Q9UGI0</id>
    </interactant>
    <interactant intactId="EBI-2798416">
        <id>Q99633</id>
        <label>PRPF18</label>
    </interactant>
    <organismsDiffer>false</organismsDiffer>
    <experiments>3</experiments>
</comment>
<comment type="interaction">
    <interactant intactId="EBI-527853">
        <id>Q9UGI0</id>
    </interactant>
    <interactant intactId="EBI-744322">
        <id>O43395</id>
        <label>PRPF3</label>
    </interactant>
    <organismsDiffer>false</organismsDiffer>
    <experiments>3</experiments>
</comment>
<comment type="interaction">
    <interactant intactId="EBI-527853">
        <id>Q9UGI0</id>
    </interactant>
    <interactant intactId="EBI-1567797">
        <id>Q8WWY3</id>
        <label>PRPF31</label>
    </interactant>
    <organismsDiffer>false</organismsDiffer>
    <experiments>3</experiments>
</comment>
<comment type="interaction">
    <interactant intactId="EBI-527853">
        <id>Q9UGI0</id>
    </interactant>
    <interactant intactId="EBI-12135327">
        <id>Q8WXF1-2</id>
        <label>PSPC1</label>
    </interactant>
    <organismsDiffer>false</organismsDiffer>
    <experiments>3</experiments>
</comment>
<comment type="interaction">
    <interactant intactId="EBI-527853">
        <id>Q9UGI0</id>
    </interactant>
    <interactant intactId="EBI-347462">
        <id>P47897</id>
        <label>QARS1</label>
    </interactant>
    <organismsDiffer>false</organismsDiffer>
    <experiments>3</experiments>
</comment>
<comment type="interaction">
    <interactant intactId="EBI-527853">
        <id>Q9UGI0</id>
    </interactant>
    <interactant intactId="EBI-3437896">
        <id>Q86YV0</id>
        <label>RASAL3</label>
    </interactant>
    <organismsDiffer>false</organismsDiffer>
    <experiments>3</experiments>
</comment>
<comment type="interaction">
    <interactant intactId="EBI-527853">
        <id>Q9UGI0</id>
    </interactant>
    <interactant intactId="EBI-2367123">
        <id>O94955</id>
        <label>RHOBTB3</label>
    </interactant>
    <organismsDiffer>false</organismsDiffer>
    <experiments>3</experiments>
</comment>
<comment type="interaction">
    <interactant intactId="EBI-527853">
        <id>Q9UGI0</id>
    </interactant>
    <interactant intactId="EBI-395959">
        <id>Q15287</id>
        <label>RNPS1</label>
    </interactant>
    <organismsDiffer>false</organismsDiffer>
    <experiments>3</experiments>
</comment>
<comment type="interaction">
    <interactant intactId="EBI-527853">
        <id>Q9UGI0</id>
    </interactant>
    <interactant intactId="EBI-727004">
        <id>O00560</id>
        <label>SDCBP</label>
    </interactant>
    <organismsDiffer>false</organismsDiffer>
    <experiments>3</experiments>
</comment>
<comment type="interaction">
    <interactant intactId="EBI-527853">
        <id>Q9UGI0</id>
    </interactant>
    <interactant intactId="EBI-745021">
        <id>Q96FJ0</id>
        <label>STAMBPL1</label>
    </interactant>
    <organismsDiffer>false</organismsDiffer>
    <experiments>3</experiments>
</comment>
<comment type="interaction">
    <interactant intactId="EBI-527853">
        <id>Q9UGI0</id>
    </interactant>
    <interactant intactId="EBI-10176124">
        <id>B7ZLI8</id>
        <label>STK19</label>
    </interactant>
    <organismsDiffer>false</organismsDiffer>
    <experiments>3</experiments>
</comment>
<comment type="interaction">
    <interactant intactId="EBI-527853">
        <id>Q9UGI0</id>
    </interactant>
    <interactant intactId="EBI-349968">
        <id>O43463</id>
        <label>SUV39H1</label>
    </interactant>
    <organismsDiffer>false</organismsDiffer>
    <experiments>3</experiments>
</comment>
<comment type="interaction">
    <interactant intactId="EBI-527853">
        <id>Q9UGI0</id>
    </interactant>
    <interactant intactId="EBI-745392">
        <id>Q9BSW7</id>
        <label>SYT17</label>
    </interactant>
    <organismsDiffer>false</organismsDiffer>
    <experiments>3</experiments>
</comment>
<comment type="interaction">
    <interactant intactId="EBI-527853">
        <id>Q9UGI0</id>
    </interactant>
    <interactant intactId="EBI-747142">
        <id>Q96C24</id>
        <label>SYTL4</label>
    </interactant>
    <organismsDiffer>false</organismsDiffer>
    <experiments>3</experiments>
</comment>
<comment type="interaction">
    <interactant intactId="EBI-527853">
        <id>Q9UGI0</id>
    </interactant>
    <interactant intactId="EBI-17455779">
        <id>Q9Y2I9-2</id>
        <label>TBC1D30</label>
    </interactant>
    <organismsDiffer>false</organismsDiffer>
    <experiments>3</experiments>
</comment>
<comment type="interaction">
    <interactant intactId="EBI-527853">
        <id>Q9UGI0</id>
    </interactant>
    <interactant intactId="EBI-18393978">
        <id>A6NER0</id>
        <label>TBC1D3F</label>
    </interactant>
    <organismsDiffer>false</organismsDiffer>
    <experiments>3</experiments>
</comment>
<comment type="interaction">
    <interactant intactId="EBI-527853">
        <id>Q9UGI0</id>
    </interactant>
    <interactant intactId="EBI-13092532">
        <id>Q6DHY5</id>
        <label>TBC1D3G</label>
    </interactant>
    <organismsDiffer>false</organismsDiffer>
    <experiments>6</experiments>
</comment>
<comment type="interaction">
    <interactant intactId="EBI-527853">
        <id>Q9UGI0</id>
    </interactant>
    <interactant intactId="EBI-710310">
        <id>Q15560</id>
        <label>TCEA2</label>
    </interactant>
    <organismsDiffer>false</organismsDiffer>
    <experiments>3</experiments>
</comment>
<comment type="interaction">
    <interactant intactId="EBI-527853">
        <id>Q9UGI0</id>
    </interactant>
    <interactant intactId="EBI-11955057">
        <id>Q8N8B7-2</id>
        <label>TCEANC</label>
    </interactant>
    <organismsDiffer>false</organismsDiffer>
    <experiments>3</experiments>
</comment>
<comment type="interaction">
    <interactant intactId="EBI-527853">
        <id>Q9UGI0</id>
    </interactant>
    <interactant intactId="EBI-741350">
        <id>Q9BT49</id>
        <label>THAP7</label>
    </interactant>
    <organismsDiffer>false</organismsDiffer>
    <experiments>3</experiments>
</comment>
<comment type="interaction">
    <interactant intactId="EBI-527853">
        <id>Q9UGI0</id>
    </interactant>
    <interactant intactId="EBI-2256865">
        <id>P35590</id>
        <label>TIE1</label>
    </interactant>
    <organismsDiffer>false</organismsDiffer>
    <experiments>3</experiments>
</comment>
<comment type="interaction">
    <interactant intactId="EBI-527853">
        <id>Q9UGI0</id>
    </interactant>
    <interactant intactId="EBI-11741437">
        <id>Q08117-2</id>
        <label>TLE5</label>
    </interactant>
    <organismsDiffer>false</organismsDiffer>
    <experiments>3</experiments>
</comment>
<comment type="interaction">
    <interactant intactId="EBI-527853">
        <id>Q9UGI0</id>
    </interactant>
    <interactant intactId="EBI-7543499">
        <id>Q8IZW8</id>
        <label>TNS4</label>
    </interactant>
    <organismsDiffer>false</organismsDiffer>
    <experiments>3</experiments>
</comment>
<comment type="interaction">
    <interactant intactId="EBI-527853">
        <id>Q9UGI0</id>
    </interactant>
    <interactant intactId="EBI-74615">
        <id>Q9H0E2</id>
        <label>TOLLIP</label>
    </interactant>
    <organismsDiffer>false</organismsDiffer>
    <experiments>3</experiments>
</comment>
<comment type="interaction">
    <interactant intactId="EBI-527853">
        <id>Q9UGI0</id>
    </interactant>
    <interactant intactId="EBI-765817">
        <id>Q9Y228</id>
        <label>TRAF3IP3</label>
    </interactant>
    <organismsDiffer>false</organismsDiffer>
    <experiments>3</experiments>
</comment>
<comment type="interaction">
    <interactant intactId="EBI-527853">
        <id>Q9UGI0</id>
    </interactant>
    <interactant intactId="EBI-3650647">
        <id>Q9BUZ4</id>
        <label>TRAF4</label>
    </interactant>
    <organismsDiffer>false</organismsDiffer>
    <experiments>3</experiments>
</comment>
<comment type="interaction">
    <interactant intactId="EBI-527853">
        <id>Q9UGI0</id>
    </interactant>
    <interactant intactId="EBI-359276">
        <id>Q9Y4K3</id>
        <label>TRAF6</label>
    </interactant>
    <organismsDiffer>false</organismsDiffer>
    <experiments>4</experiments>
</comment>
<comment type="interaction">
    <interactant intactId="EBI-527853">
        <id>Q9UGI0</id>
    </interactant>
    <interactant intactId="EBI-11961968">
        <id>P0DI81-3</id>
        <label>TRAPPC2</label>
    </interactant>
    <organismsDiffer>false</organismsDiffer>
    <experiments>3</experiments>
</comment>
<comment type="interaction">
    <interactant intactId="EBI-527853">
        <id>Q9UGI0</id>
    </interactant>
    <interactant intactId="EBI-10241197">
        <id>Q3SY00</id>
        <label>TSGA10IP</label>
    </interactant>
    <organismsDiffer>false</organismsDiffer>
    <experiments>3</experiments>
</comment>
<comment type="interaction">
    <interactant intactId="EBI-527853">
        <id>Q9UGI0</id>
    </interactant>
    <interactant intactId="EBI-308511">
        <id>Q9UJ04</id>
        <label>TSPYL4</label>
    </interactant>
    <organismsDiffer>false</organismsDiffer>
    <experiments>3</experiments>
</comment>
<comment type="interaction">
    <interactant intactId="EBI-527853">
        <id>Q9UGI0</id>
    </interactant>
    <interactant intactId="EBI-8994397">
        <id>Q5T7W7</id>
        <label>TSTD2</label>
    </interactant>
    <organismsDiffer>false</organismsDiffer>
    <experiments>3</experiments>
</comment>
<comment type="interaction">
    <interactant intactId="EBI-527853">
        <id>Q9UGI0</id>
    </interactant>
    <interactant intactId="EBI-7353612">
        <id>P57075-2</id>
        <label>UBASH3A</label>
    </interactant>
    <organismsDiffer>false</organismsDiffer>
    <experiments>3</experiments>
</comment>
<comment type="interaction">
    <interactant intactId="EBI-527853">
        <id>Q9UGI0</id>
    </interactant>
    <interactant intactId="EBI-3390054">
        <id>P0CG48</id>
        <label>UBC</label>
    </interactant>
    <organismsDiffer>false</organismsDiffer>
    <experiments>2</experiments>
</comment>
<comment type="interaction">
    <interactant intactId="EBI-527853">
        <id>Q9UGI0</id>
    </interactant>
    <interactant intactId="EBI-743272">
        <id>O75604</id>
        <label>USP2</label>
    </interactant>
    <organismsDiffer>false</organismsDiffer>
    <experiments>3</experiments>
</comment>
<comment type="interaction">
    <interactant intactId="EBI-527853">
        <id>Q9UGI0</id>
    </interactant>
    <interactant intactId="EBI-297568">
        <id>Q9UKW4</id>
        <label>VAV3</label>
    </interactant>
    <organismsDiffer>false</organismsDiffer>
    <experiments>3</experiments>
</comment>
<comment type="interaction">
    <interactant intactId="EBI-527853">
        <id>Q9UGI0</id>
    </interactant>
    <interactant intactId="EBI-11980193">
        <id>Q14119</id>
        <label>VEZF1</label>
    </interactant>
    <organismsDiffer>false</organismsDiffer>
    <experiments>3</experiments>
</comment>
<comment type="interaction">
    <interactant intactId="EBI-527853">
        <id>Q9UGI0</id>
    </interactant>
    <interactant intactId="EBI-11745701">
        <id>P19544-6</id>
        <label>WT1</label>
    </interactant>
    <organismsDiffer>false</organismsDiffer>
    <experiments>3</experiments>
</comment>
<comment type="interaction">
    <interactant intactId="EBI-527853">
        <id>Q9UGI0</id>
    </interactant>
    <interactant intactId="EBI-357997">
        <id>P13010</id>
        <label>XRCC5</label>
    </interactant>
    <organismsDiffer>false</organismsDiffer>
    <experiments>3</experiments>
</comment>
<comment type="interaction">
    <interactant intactId="EBI-527853">
        <id>Q9UGI0</id>
    </interactant>
    <interactant intactId="EBI-744471">
        <id>O43167</id>
        <label>ZBTB24</label>
    </interactant>
    <organismsDiffer>false</organismsDiffer>
    <experiments>3</experiments>
</comment>
<comment type="interaction">
    <interactant intactId="EBI-527853">
        <id>Q9UGI0</id>
    </interactant>
    <interactant intactId="EBI-7781767">
        <id>Q9UFB7</id>
        <label>ZBTB47</label>
    </interactant>
    <organismsDiffer>false</organismsDiffer>
    <experiments>3</experiments>
</comment>
<comment type="interaction">
    <interactant intactId="EBI-527853">
        <id>Q9UGI0</id>
    </interactant>
    <interactant intactId="EBI-2555767">
        <id>Q15973</id>
        <label>ZNF124</label>
    </interactant>
    <organismsDiffer>false</organismsDiffer>
    <experiments>3</experiments>
</comment>
<comment type="interaction">
    <interactant intactId="EBI-527853">
        <id>Q9UGI0</id>
    </interactant>
    <interactant intactId="EBI-1105334">
        <id>P17021</id>
        <label>ZNF17</label>
    </interactant>
    <organismsDiffer>false</organismsDiffer>
    <experiments>3</experiments>
</comment>
<comment type="interaction">
    <interactant intactId="EBI-527853">
        <id>Q9UGI0</id>
    </interactant>
    <interactant intactId="EBI-10177272">
        <id>P15622-3</id>
        <label>ZNF250</label>
    </interactant>
    <organismsDiffer>false</organismsDiffer>
    <experiments>3</experiments>
</comment>
<comment type="interaction">
    <interactant intactId="EBI-527853">
        <id>Q9UGI0</id>
    </interactant>
    <interactant intactId="EBI-347633">
        <id>Q9H9D4</id>
        <label>ZNF408</label>
    </interactant>
    <organismsDiffer>false</organismsDiffer>
    <experiments>3</experiments>
</comment>
<comment type="interaction">
    <interactant intactId="EBI-527853">
        <id>Q9UGI0</id>
    </interactant>
    <interactant intactId="EBI-740727">
        <id>Q8TAU3</id>
        <label>ZNF417</label>
    </interactant>
    <organismsDiffer>false</organismsDiffer>
    <experiments>3</experiments>
</comment>
<comment type="interaction">
    <interactant intactId="EBI-527853">
        <id>Q9UGI0</id>
    </interactant>
    <interactant intactId="EBI-11962468">
        <id>Q7Z4V0</id>
        <label>ZNF438</label>
    </interactant>
    <organismsDiffer>false</organismsDiffer>
    <experiments>3</experiments>
</comment>
<comment type="interaction">
    <interactant intactId="EBI-527853">
        <id>Q9UGI0</id>
    </interactant>
    <interactant intactId="EBI-1105370">
        <id>Q9ULM2</id>
        <label>ZNF490</label>
    </interactant>
    <organismsDiffer>false</organismsDiffer>
    <experiments>3</experiments>
</comment>
<comment type="interaction">
    <interactant intactId="EBI-527853">
        <id>Q9UGI0</id>
    </interactant>
    <interactant intactId="EBI-10486136">
        <id>Q6ZNH5</id>
        <label>ZNF497</label>
    </interactant>
    <organismsDiffer>false</organismsDiffer>
    <experiments>3</experiments>
</comment>
<comment type="interaction">
    <interactant intactId="EBI-527853">
        <id>Q9UGI0</id>
    </interactant>
    <interactant intactId="EBI-2555731">
        <id>Q9H707</id>
        <label>ZNF552</label>
    </interactant>
    <organismsDiffer>false</organismsDiffer>
    <experiments>3</experiments>
</comment>
<comment type="interaction">
    <interactant intactId="EBI-527853">
        <id>Q9UGI0</id>
    </interactant>
    <interactant intactId="EBI-14069183">
        <id>Q86XF7</id>
        <label>ZNF575</label>
    </interactant>
    <organismsDiffer>false</organismsDiffer>
    <experiments>3</experiments>
</comment>
<comment type="interaction">
    <interactant intactId="EBI-527853">
        <id>Q9UGI0</id>
    </interactant>
    <interactant intactId="EBI-745520">
        <id>Q9P0T4</id>
        <label>ZNF581</label>
    </interactant>
    <organismsDiffer>false</organismsDiffer>
    <experiments>3</experiments>
</comment>
<comment type="interaction">
    <interactant intactId="EBI-527853">
        <id>Q9UGI0</id>
    </interactant>
    <interactant intactId="EBI-6427977">
        <id>Q96SQ5</id>
        <label>ZNF587</label>
    </interactant>
    <organismsDiffer>false</organismsDiffer>
    <experiments>3</experiments>
</comment>
<comment type="interaction">
    <interactant intactId="EBI-527853">
        <id>Q9UGI0</id>
    </interactant>
    <interactant intactId="EBI-8653994">
        <id>Q96NL3</id>
        <label>ZNF599</label>
    </interactant>
    <organismsDiffer>false</organismsDiffer>
    <experiments>3</experiments>
</comment>
<comment type="interaction">
    <interactant intactId="EBI-527853">
        <id>Q9UGI0</id>
    </interactant>
    <interactant intactId="EBI-9977294">
        <id>Q9UEG4</id>
        <label>ZNF629</label>
    </interactant>
    <organismsDiffer>false</organismsDiffer>
    <experiments>3</experiments>
</comment>
<comment type="interaction">
    <interactant intactId="EBI-527853">
        <id>Q9UGI0</id>
    </interactant>
    <interactant intactId="EBI-11985915">
        <id>Q5T619</id>
        <label>ZNF648</label>
    </interactant>
    <organismsDiffer>false</organismsDiffer>
    <experiments>3</experiments>
</comment>
<comment type="interaction">
    <interactant intactId="EBI-527853">
        <id>Q9UGI0</id>
    </interactant>
    <interactant intactId="EBI-745775">
        <id>Q96H86</id>
        <label>ZNF764</label>
    </interactant>
    <organismsDiffer>false</organismsDiffer>
    <experiments>3</experiments>
</comment>
<comment type="interaction">
    <interactant intactId="EBI-527853">
        <id>Q9UGI0</id>
    </interactant>
    <interactant intactId="EBI-7149881">
        <id>Q96BV0</id>
        <label>ZNF775</label>
    </interactant>
    <organismsDiffer>false</organismsDiffer>
    <experiments>3</experiments>
</comment>
<comment type="interaction">
    <interactant intactId="EBI-527853">
        <id>Q9UGI0</id>
    </interactant>
    <interactant intactId="EBI-10240849">
        <id>Q3KQV3</id>
        <label>ZNF792</label>
    </interactant>
    <organismsDiffer>false</organismsDiffer>
    <experiments>3</experiments>
</comment>
<comment type="interaction">
    <interactant intactId="EBI-527853">
        <id>Q9UGI0</id>
    </interactant>
    <interactant intactId="EBI-11962574">
        <id>Q96EG3</id>
        <label>ZNF837</label>
    </interactant>
    <organismsDiffer>false</organismsDiffer>
    <experiments>3</experiments>
</comment>
<comment type="interaction">
    <interactant intactId="EBI-527853">
        <id>Q9UGI0</id>
    </interactant>
    <interactant intactId="EBI-25492395">
        <id>PRO_0000449633</id>
        <label>rep</label>
        <dbReference type="UniProtKB" id="P0DTD1"/>
    </interactant>
    <organismsDiffer>true</organismsDiffer>
    <experiments>3</experiments>
</comment>
<comment type="subcellular location">
    <subcellularLocation>
        <location evidence="6 7 11">Cytoplasm</location>
    </subcellularLocation>
    <subcellularLocation>
        <location evidence="5 6 11">Nucleus</location>
    </subcellularLocation>
    <text evidence="6 11">Enriched in punctate localization in the cytoplasm.</text>
</comment>
<comment type="tissue specificity">
    <text evidence="5">Widely expressed.</text>
</comment>
<comment type="domain">
    <text evidence="10 11">The RanBP2-type zinc fingers, also called NZFs, mediate the interaction with ubiquitin and determine linkage specificity (PubMed:25752577). RanBP2-type zinc fingers 1 and 2 (also named NZF1 and NZF2) specifically recognize and bind 'Lys-29'- and 'Lys-33'-linked ubiquitin (PubMed:25752573, PubMed:25752577). RanBP2-type zinc finger 3 (also named NZF3) binds 'Lys-33'-linked ubiquitin and shows weak binding to 'Lys-6'-, 'Lys-48'- and 'Lys-63'-linked ubiquitin chains but it does not interact with 'Lys-29'-linked chains (PubMed:25752573).</text>
</comment>
<comment type="domain">
    <text evidence="6 8">The OTU domain mediates the deubiquitinating activity.</text>
</comment>
<comment type="domain">
    <text evidence="8">The second ankyrin repeat ANK 2 is termed AnkUBD, it interacts with ubiquitin hydrophobic patch and contributes to linkage specificity.</text>
</comment>
<comment type="similarity">
    <text evidence="15">Belongs to the peptidase C64 family.</text>
</comment>
<comment type="sequence caution" evidence="15">
    <conflict type="erroneous initiation">
        <sequence resource="EMBL-CDS" id="BAG64010"/>
    </conflict>
</comment>
<gene>
    <name evidence="14 16" type="primary">ZRANB1</name>
    <name evidence="13" type="synonym">TRABID</name>
</gene>
<name>ZRAN1_HUMAN</name>
<feature type="chain" id="PRO_0000065595" description="Ubiquitin thioesterase ZRANB1">
    <location>
        <begin position="1"/>
        <end position="708"/>
    </location>
</feature>
<feature type="repeat" description="ANK 1">
    <location>
        <begin position="260"/>
        <end position="290"/>
    </location>
</feature>
<feature type="repeat" description="ANK 2">
    <location>
        <begin position="313"/>
        <end position="340"/>
    </location>
</feature>
<feature type="domain" description="OTU" evidence="2">
    <location>
        <begin position="432"/>
        <end position="592"/>
    </location>
</feature>
<feature type="zinc finger region" description="RanBP2-type 1" evidence="3">
    <location>
        <begin position="3"/>
        <end position="33"/>
    </location>
</feature>
<feature type="zinc finger region" description="RanBP2-type 2" evidence="3">
    <location>
        <begin position="84"/>
        <end position="113"/>
    </location>
</feature>
<feature type="zinc finger region" description="RanBP2-type 3" evidence="3">
    <location>
        <begin position="149"/>
        <end position="178"/>
    </location>
</feature>
<feature type="region of interest" description="Disordered" evidence="4">
    <location>
        <begin position="38"/>
        <end position="73"/>
    </location>
</feature>
<feature type="region of interest" description="Disordered" evidence="4">
    <location>
        <begin position="200"/>
        <end position="225"/>
    </location>
</feature>
<feature type="region of interest" description="TRAF-binding" evidence="5">
    <location>
        <begin position="392"/>
        <end position="641"/>
    </location>
</feature>
<feature type="compositionally biased region" description="Polar residues" evidence="4">
    <location>
        <begin position="206"/>
        <end position="215"/>
    </location>
</feature>
<feature type="active site" description="Nucleophile" evidence="8">
    <location>
        <position position="443"/>
    </location>
</feature>
<feature type="active site" description="Proton acceptor" evidence="1">
    <location>
        <position position="585"/>
    </location>
</feature>
<feature type="binding site" evidence="3 11 17">
    <location>
        <position position="10"/>
    </location>
    <ligand>
        <name>Zn(2+)</name>
        <dbReference type="ChEBI" id="CHEBI:29105"/>
        <label>1</label>
    </ligand>
</feature>
<feature type="binding site" evidence="3 11 17">
    <location>
        <position position="13"/>
    </location>
    <ligand>
        <name>Zn(2+)</name>
        <dbReference type="ChEBI" id="CHEBI:29105"/>
        <label>1</label>
    </ligand>
</feature>
<feature type="binding site" evidence="3 11 17">
    <location>
        <position position="24"/>
    </location>
    <ligand>
        <name>Zn(2+)</name>
        <dbReference type="ChEBI" id="CHEBI:29105"/>
        <label>1</label>
    </ligand>
</feature>
<feature type="binding site" evidence="3 11 17">
    <location>
        <position position="27"/>
    </location>
    <ligand>
        <name>Zn(2+)</name>
        <dbReference type="ChEBI" id="CHEBI:29105"/>
        <label>1</label>
    </ligand>
</feature>
<feature type="binding site" evidence="3">
    <location>
        <position position="90"/>
    </location>
    <ligand>
        <name>Zn(2+)</name>
        <dbReference type="ChEBI" id="CHEBI:29105"/>
        <label>2</label>
    </ligand>
</feature>
<feature type="binding site" evidence="3">
    <location>
        <position position="93"/>
    </location>
    <ligand>
        <name>Zn(2+)</name>
        <dbReference type="ChEBI" id="CHEBI:29105"/>
        <label>2</label>
    </ligand>
</feature>
<feature type="binding site" evidence="3">
    <location>
        <position position="104"/>
    </location>
    <ligand>
        <name>Zn(2+)</name>
        <dbReference type="ChEBI" id="CHEBI:29105"/>
        <label>2</label>
    </ligand>
</feature>
<feature type="binding site" evidence="3">
    <location>
        <position position="107"/>
    </location>
    <ligand>
        <name>Zn(2+)</name>
        <dbReference type="ChEBI" id="CHEBI:29105"/>
        <label>2</label>
    </ligand>
</feature>
<feature type="binding site" evidence="3">
    <location>
        <position position="155"/>
    </location>
    <ligand>
        <name>Zn(2+)</name>
        <dbReference type="ChEBI" id="CHEBI:29105"/>
        <label>3</label>
    </ligand>
</feature>
<feature type="binding site" evidence="3">
    <location>
        <position position="158"/>
    </location>
    <ligand>
        <name>Zn(2+)</name>
        <dbReference type="ChEBI" id="CHEBI:29105"/>
        <label>3</label>
    </ligand>
</feature>
<feature type="binding site" evidence="3">
    <location>
        <position position="169"/>
    </location>
    <ligand>
        <name>Zn(2+)</name>
        <dbReference type="ChEBI" id="CHEBI:29105"/>
        <label>3</label>
    </ligand>
</feature>
<feature type="binding site" evidence="3">
    <location>
        <position position="172"/>
    </location>
    <ligand>
        <name>Zn(2+)</name>
        <dbReference type="ChEBI" id="CHEBI:29105"/>
        <label>3</label>
    </ligand>
</feature>
<feature type="mutagenesis site" description="Abolishes the binding to ubiquitin chains but not the deubiquitinating activity; when associated with 14-LV-15; A-90; 94-LV-95; A-155 and 159-LV-160." evidence="6">
    <original>C</original>
    <variation>A</variation>
    <location>
        <position position="10"/>
    </location>
</feature>
<feature type="mutagenesis site" description="Does not affect binding to 'Lys-29'- and 'Lys-33'-linked ubiquitin." evidence="10">
    <original>Y</original>
    <variation>A</variation>
    <location>
        <position position="12"/>
    </location>
</feature>
<feature type="mutagenesis site" description="Abolishes the binding to ubiquitin chains but not the deubiquitinating activity; when associated with A-10; A-90; 94-LV-95; A-155 and 159-LV-160." evidence="6">
    <original>TY</original>
    <variation>LV</variation>
    <location>
        <begin position="14"/>
        <end position="15"/>
    </location>
</feature>
<feature type="mutagenesis site" description="Abolished binding to 'Lys-29'- and 'Lys-33'-linked ubiquitin." evidence="10">
    <original>T</original>
    <variation>A</variation>
    <location>
        <position position="14"/>
    </location>
</feature>
<feature type="mutagenesis site" description="Strongly reduced binding to 'Lys-29'- and 'Lys-33'-linked ubiquitin." evidence="10 11">
    <original>Y</original>
    <variation>F</variation>
    <location>
        <position position="15"/>
    </location>
</feature>
<feature type="mutagenesis site" description="Does not affect binding to 'Lys-29'- and 'Lys-33'-linked ubiquitin." evidence="10">
    <original>E</original>
    <variation>A</variation>
    <location>
        <position position="16"/>
    </location>
</feature>
<feature type="mutagenesis site" description="Abolished binding to 'Lys-33'-linked diubiquitin." evidence="11">
    <original>W</original>
    <variation>A</variation>
    <location>
        <position position="18"/>
    </location>
</feature>
<feature type="mutagenesis site" description="Strongly reduced binding to 'Lys-33'-linked diubiquitin." evidence="11">
    <original>S</original>
    <variation>R</variation>
    <location>
        <position position="20"/>
    </location>
</feature>
<feature type="mutagenesis site" description="Does not affect binding to 'Lys-29'- and 'Lys-33'-linked ubiquitin." evidence="10">
    <original>T</original>
    <variation>A</variation>
    <location>
        <position position="25"/>
    </location>
</feature>
<feature type="mutagenesis site" description="Abolished binding to 'Lys-33'-linked diubiquitin." evidence="11">
    <original>T</original>
    <variation>D</variation>
    <location>
        <position position="25"/>
    </location>
</feature>
<feature type="mutagenesis site" description="Abolished binding to 'Lys-29'- and 'Lys-33'-linked ubiquitin." evidence="10">
    <original>M</original>
    <variation>A</variation>
    <location>
        <position position="26"/>
    </location>
</feature>
<feature type="mutagenesis site" description="Abolishes the binding to ubiquitin chains but not the deubiquitinating activity; when associated with A-10; 14-LV-15; 94-LV-95; A-155 and 159-LV-160." evidence="6">
    <original>C</original>
    <variation>A</variation>
    <location>
        <position position="90"/>
    </location>
</feature>
<feature type="mutagenesis site" description="Abolishes the binding to ubiquitin chains but not the deubiquitinating activity; when associated with A-10; 14-LV-15; A-90; A-155 and 159-LV-160." evidence="6">
    <original>TY</original>
    <variation>LV</variation>
    <location>
        <begin position="94"/>
        <end position="95"/>
    </location>
</feature>
<feature type="mutagenesis site" description="Abolishes the binding to ubiquitin chains but not the deubiquitinating activity; when associated with A-10; 14-LV-15; A-90; 94-LV-95 and 159-LV-160." evidence="6">
    <original>C</original>
    <variation>A</variation>
    <location>
        <position position="155"/>
    </location>
</feature>
<feature type="mutagenesis site" description="Abolishes the binding to ubiquitin chains but not the deubiquitinating activity; when associated with A-10; 14-LV-15; A-90; 94-LV-95; and A-155." evidence="6">
    <original>TY</original>
    <variation>LV</variation>
    <location>
        <begin position="159"/>
        <end position="160"/>
    </location>
</feature>
<feature type="mutagenesis site" description="Abolishes the deubiquitinating activity but not the binding to ubiquitin chains." evidence="6 10 11">
    <original>C</original>
    <variation>S</variation>
    <location>
        <position position="443"/>
    </location>
</feature>
<feature type="sequence conflict" description="In Ref. 1; CAB64449." evidence="15" ref="1">
    <original>F</original>
    <variation>I</variation>
    <location>
        <position position="374"/>
    </location>
</feature>
<feature type="sequence conflict" description="In Ref. 1; CAB64449." evidence="15" ref="1">
    <original>P</original>
    <variation>A</variation>
    <location>
        <position position="384"/>
    </location>
</feature>
<feature type="sequence conflict" description="In Ref. 2; BAG64010." evidence="15" ref="2">
    <original>A</original>
    <variation>P</variation>
    <location>
        <position position="602"/>
    </location>
</feature>
<feature type="strand" evidence="19">
    <location>
        <begin position="11"/>
        <end position="13"/>
    </location>
</feature>
<feature type="strand" evidence="19">
    <location>
        <begin position="25"/>
        <end position="27"/>
    </location>
</feature>
<feature type="helix" evidence="18">
    <location>
        <begin position="249"/>
        <end position="257"/>
    </location>
</feature>
<feature type="helix" evidence="18">
    <location>
        <begin position="261"/>
        <end position="275"/>
    </location>
</feature>
<feature type="helix" evidence="18">
    <location>
        <begin position="278"/>
        <end position="285"/>
    </location>
</feature>
<feature type="turn" evidence="18">
    <location>
        <begin position="286"/>
        <end position="288"/>
    </location>
</feature>
<feature type="helix" evidence="18">
    <location>
        <begin position="297"/>
        <end position="303"/>
    </location>
</feature>
<feature type="turn" evidence="18">
    <location>
        <begin position="306"/>
        <end position="308"/>
    </location>
</feature>
<feature type="helix" evidence="18">
    <location>
        <begin position="315"/>
        <end position="321"/>
    </location>
</feature>
<feature type="helix" evidence="18">
    <location>
        <begin position="325"/>
        <end position="340"/>
    </location>
</feature>
<feature type="helix" evidence="18">
    <location>
        <begin position="344"/>
        <end position="347"/>
    </location>
</feature>
<feature type="helix" evidence="18">
    <location>
        <begin position="349"/>
        <end position="361"/>
    </location>
</feature>
<feature type="strand" evidence="18">
    <location>
        <begin position="363"/>
        <end position="365"/>
    </location>
</feature>
<feature type="strand" evidence="18">
    <location>
        <begin position="373"/>
        <end position="376"/>
    </location>
</feature>
<feature type="helix" evidence="18">
    <location>
        <begin position="385"/>
        <end position="389"/>
    </location>
</feature>
<feature type="helix" evidence="18">
    <location>
        <begin position="392"/>
        <end position="402"/>
    </location>
</feature>
<feature type="helix" evidence="18">
    <location>
        <begin position="405"/>
        <end position="412"/>
    </location>
</feature>
<feature type="strand" evidence="18">
    <location>
        <begin position="415"/>
        <end position="419"/>
    </location>
</feature>
<feature type="helix" evidence="18">
    <location>
        <begin position="422"/>
        <end position="425"/>
    </location>
</feature>
<feature type="turn" evidence="18">
    <location>
        <begin position="426"/>
        <end position="428"/>
    </location>
</feature>
<feature type="strand" evidence="18">
    <location>
        <begin position="432"/>
        <end position="435"/>
    </location>
</feature>
<feature type="helix" evidence="18">
    <location>
        <begin position="443"/>
        <end position="450"/>
    </location>
</feature>
<feature type="turn" evidence="18">
    <location>
        <begin position="451"/>
        <end position="453"/>
    </location>
</feature>
<feature type="helix" evidence="18">
    <location>
        <begin position="458"/>
        <end position="460"/>
    </location>
</feature>
<feature type="helix" evidence="18">
    <location>
        <begin position="461"/>
        <end position="472"/>
    </location>
</feature>
<feature type="helix" evidence="18">
    <location>
        <begin position="474"/>
        <end position="491"/>
    </location>
</feature>
<feature type="helix" evidence="18">
    <location>
        <begin position="500"/>
        <end position="513"/>
    </location>
</feature>
<feature type="helix" evidence="18">
    <location>
        <begin position="523"/>
        <end position="532"/>
    </location>
</feature>
<feature type="strand" evidence="18">
    <location>
        <begin position="537"/>
        <end position="541"/>
    </location>
</feature>
<feature type="strand" evidence="18">
    <location>
        <begin position="560"/>
        <end position="562"/>
    </location>
</feature>
<feature type="helix" evidence="18">
    <location>
        <begin position="569"/>
        <end position="571"/>
    </location>
</feature>
<feature type="strand" evidence="18">
    <location>
        <begin position="577"/>
        <end position="582"/>
    </location>
</feature>
<feature type="strand" evidence="18">
    <location>
        <begin position="585"/>
        <end position="592"/>
    </location>
</feature>
<feature type="strand" evidence="18">
    <location>
        <begin position="612"/>
        <end position="620"/>
    </location>
</feature>
<feature type="turn" evidence="18">
    <location>
        <begin position="634"/>
        <end position="636"/>
    </location>
</feature>
<feature type="helix" evidence="18">
    <location>
        <begin position="640"/>
        <end position="650"/>
    </location>
</feature>
<feature type="strand" evidence="18">
    <location>
        <begin position="653"/>
        <end position="655"/>
    </location>
</feature>
<feature type="strand" evidence="18">
    <location>
        <begin position="661"/>
        <end position="668"/>
    </location>
</feature>
<feature type="turn" evidence="18">
    <location>
        <begin position="669"/>
        <end position="671"/>
    </location>
</feature>
<feature type="helix" evidence="18">
    <location>
        <begin position="674"/>
        <end position="688"/>
    </location>
</feature>
<evidence type="ECO:0000250" key="1">
    <source>
        <dbReference type="UniProtKB" id="Q6GQQ9"/>
    </source>
</evidence>
<evidence type="ECO:0000255" key="2">
    <source>
        <dbReference type="PROSITE-ProRule" id="PRU00139"/>
    </source>
</evidence>
<evidence type="ECO:0000255" key="3">
    <source>
        <dbReference type="PROSITE-ProRule" id="PRU00322"/>
    </source>
</evidence>
<evidence type="ECO:0000256" key="4">
    <source>
        <dbReference type="SAM" id="MobiDB-lite"/>
    </source>
</evidence>
<evidence type="ECO:0000269" key="5">
    <source>
    </source>
</evidence>
<evidence type="ECO:0000269" key="6">
    <source>
    </source>
</evidence>
<evidence type="ECO:0000269" key="7">
    <source>
    </source>
</evidence>
<evidence type="ECO:0000269" key="8">
    <source>
    </source>
</evidence>
<evidence type="ECO:0000269" key="9">
    <source>
    </source>
</evidence>
<evidence type="ECO:0000269" key="10">
    <source>
    </source>
</evidence>
<evidence type="ECO:0000269" key="11">
    <source>
    </source>
</evidence>
<evidence type="ECO:0000269" key="12">
    <source>
    </source>
</evidence>
<evidence type="ECO:0000303" key="13">
    <source>
    </source>
</evidence>
<evidence type="ECO:0000303" key="14">
    <source>
    </source>
</evidence>
<evidence type="ECO:0000305" key="15"/>
<evidence type="ECO:0000312" key="16">
    <source>
        <dbReference type="HGNC" id="HGNC:18224"/>
    </source>
</evidence>
<evidence type="ECO:0007744" key="17">
    <source>
        <dbReference type="PDB" id="5AF6"/>
    </source>
</evidence>
<evidence type="ECO:0007829" key="18">
    <source>
        <dbReference type="PDB" id="3ZRH"/>
    </source>
</evidence>
<evidence type="ECO:0007829" key="19">
    <source>
        <dbReference type="PDB" id="5AF6"/>
    </source>
</evidence>
<organism>
    <name type="scientific">Homo sapiens</name>
    <name type="common">Human</name>
    <dbReference type="NCBI Taxonomy" id="9606"/>
    <lineage>
        <taxon>Eukaryota</taxon>
        <taxon>Metazoa</taxon>
        <taxon>Chordata</taxon>
        <taxon>Craniata</taxon>
        <taxon>Vertebrata</taxon>
        <taxon>Euteleostomi</taxon>
        <taxon>Mammalia</taxon>
        <taxon>Eutheria</taxon>
        <taxon>Euarchontoglires</taxon>
        <taxon>Primates</taxon>
        <taxon>Haplorrhini</taxon>
        <taxon>Catarrhini</taxon>
        <taxon>Hominidae</taxon>
        <taxon>Homo</taxon>
    </lineage>
</organism>
<sequence length="708" mass="80967">MSERGIKWACEYCTYENWPSAIKCTMCRAQRPSGTIITEDPFKSGSSDVGRDWDPSSTEGGSSPLICPDSSARPRVKSSYSMENANKWSCHMCTYLNWPRAIRCTQCLSQRRTRSPTESPQSSGSGSRPVAFSVDPCEEYNDRNKLNTRTQHWTCSVCTYENWAKAKRCVVCDHPRPNNIEAIELAETEEASSIINEQDRARWRGSCSSGNSQRRSPPATKRDSEVKMDFQRIELAGAVGSKEELEVDFKKLKQIKNRMKKTDWLFLNACVGVVEGDLAAIEAYKSSGGDIARQLTADEVRLLNRPSAFDVGYTLVHLAIRFQRQDMLAILLTEVSQQAAKCIPAMVCPELTEQIRREIAASLHQRKGDFACYFLTDLVTFTLPADIEDLPPTVQEKLFDEVLDRDVQKELEEESPIINWSLELATRLDSRLYALWNRTAGDCLLDSVLQATWGIYDKDSVLRKALHDSLHDCSHWFYTRWKDWESWYSQSFGLHFSLREEQWQEDWAFILSLASQPGASLEQTHIFVLAHILRRPIIVYGVKYYKSFRGETLGYTRFQGVYLPLLWEQSFCWKSPIALGYTRGHFSALVAMENDGYGNRGAGANLNTDDDVTITFLPLVDSERKLLHVHFLSAQELGNEEQQEKLLREWLDCCVTEGGVLVAMQKSSRRRNHPLVTQMVEKWLDRYRQIRPCTSLSDGEEDEDDEDE</sequence>
<proteinExistence type="evidence at protein level"/>
<accession>Q9UGI0</accession>
<accession>B4DZ98</accession>
<accession>D3DRF4</accession>
<accession>Q5SQP6</accession>
<accession>Q69YK3</accession>
<keyword id="KW-0002">3D-structure</keyword>
<keyword id="KW-0040">ANK repeat</keyword>
<keyword id="KW-0963">Cytoplasm</keyword>
<keyword id="KW-0378">Hydrolase</keyword>
<keyword id="KW-0479">Metal-binding</keyword>
<keyword id="KW-0539">Nucleus</keyword>
<keyword id="KW-0645">Protease</keyword>
<keyword id="KW-1267">Proteomics identification</keyword>
<keyword id="KW-1185">Reference proteome</keyword>
<keyword id="KW-0677">Repeat</keyword>
<keyword id="KW-0788">Thiol protease</keyword>
<keyword id="KW-0833">Ubl conjugation pathway</keyword>
<keyword id="KW-0879">Wnt signaling pathway</keyword>
<keyword id="KW-0862">Zinc</keyword>
<keyword id="KW-0863">Zinc-finger</keyword>
<reference key="1">
    <citation type="journal article" date="2001" name="Biochem. J.">
        <title>Isolation and characterization of two novel A20-like proteins.</title>
        <authorList>
            <person name="Evans P.C."/>
            <person name="Taylor E.R."/>
            <person name="Coadwell J."/>
            <person name="Heyninck K."/>
            <person name="Beyaert R."/>
            <person name="Kilshaw P.J."/>
        </authorList>
    </citation>
    <scope>NUCLEOTIDE SEQUENCE [MRNA]</scope>
    <scope>SUBCELLULAR LOCATION</scope>
    <scope>TISSUE SPECIFICITY</scope>
    <scope>INTERACTION WITH TRAF6</scope>
    <source>
        <tissue>Umbilical vein endothelial cell</tissue>
    </source>
</reference>
<reference key="2">
    <citation type="journal article" date="2004" name="Nat. Genet.">
        <title>Complete sequencing and characterization of 21,243 full-length human cDNAs.</title>
        <authorList>
            <person name="Ota T."/>
            <person name="Suzuki Y."/>
            <person name="Nishikawa T."/>
            <person name="Otsuki T."/>
            <person name="Sugiyama T."/>
            <person name="Irie R."/>
            <person name="Wakamatsu A."/>
            <person name="Hayashi K."/>
            <person name="Sato H."/>
            <person name="Nagai K."/>
            <person name="Kimura K."/>
            <person name="Makita H."/>
            <person name="Sekine M."/>
            <person name="Obayashi M."/>
            <person name="Nishi T."/>
            <person name="Shibahara T."/>
            <person name="Tanaka T."/>
            <person name="Ishii S."/>
            <person name="Yamamoto J."/>
            <person name="Saito K."/>
            <person name="Kawai Y."/>
            <person name="Isono Y."/>
            <person name="Nakamura Y."/>
            <person name="Nagahari K."/>
            <person name="Murakami K."/>
            <person name="Yasuda T."/>
            <person name="Iwayanagi T."/>
            <person name="Wagatsuma M."/>
            <person name="Shiratori A."/>
            <person name="Sudo H."/>
            <person name="Hosoiri T."/>
            <person name="Kaku Y."/>
            <person name="Kodaira H."/>
            <person name="Kondo H."/>
            <person name="Sugawara M."/>
            <person name="Takahashi M."/>
            <person name="Kanda K."/>
            <person name="Yokoi T."/>
            <person name="Furuya T."/>
            <person name="Kikkawa E."/>
            <person name="Omura Y."/>
            <person name="Abe K."/>
            <person name="Kamihara K."/>
            <person name="Katsuta N."/>
            <person name="Sato K."/>
            <person name="Tanikawa M."/>
            <person name="Yamazaki M."/>
            <person name="Ninomiya K."/>
            <person name="Ishibashi T."/>
            <person name="Yamashita H."/>
            <person name="Murakawa K."/>
            <person name="Fujimori K."/>
            <person name="Tanai H."/>
            <person name="Kimata M."/>
            <person name="Watanabe M."/>
            <person name="Hiraoka S."/>
            <person name="Chiba Y."/>
            <person name="Ishida S."/>
            <person name="Ono Y."/>
            <person name="Takiguchi S."/>
            <person name="Watanabe S."/>
            <person name="Yosida M."/>
            <person name="Hotuta T."/>
            <person name="Kusano J."/>
            <person name="Kanehori K."/>
            <person name="Takahashi-Fujii A."/>
            <person name="Hara H."/>
            <person name="Tanase T.-O."/>
            <person name="Nomura Y."/>
            <person name="Togiya S."/>
            <person name="Komai F."/>
            <person name="Hara R."/>
            <person name="Takeuchi K."/>
            <person name="Arita M."/>
            <person name="Imose N."/>
            <person name="Musashino K."/>
            <person name="Yuuki H."/>
            <person name="Oshima A."/>
            <person name="Sasaki N."/>
            <person name="Aotsuka S."/>
            <person name="Yoshikawa Y."/>
            <person name="Matsunawa H."/>
            <person name="Ichihara T."/>
            <person name="Shiohata N."/>
            <person name="Sano S."/>
            <person name="Moriya S."/>
            <person name="Momiyama H."/>
            <person name="Satoh N."/>
            <person name="Takami S."/>
            <person name="Terashima Y."/>
            <person name="Suzuki O."/>
            <person name="Nakagawa S."/>
            <person name="Senoh A."/>
            <person name="Mizoguchi H."/>
            <person name="Goto Y."/>
            <person name="Shimizu F."/>
            <person name="Wakebe H."/>
            <person name="Hishigaki H."/>
            <person name="Watanabe T."/>
            <person name="Sugiyama A."/>
            <person name="Takemoto M."/>
            <person name="Kawakami B."/>
            <person name="Yamazaki M."/>
            <person name="Watanabe K."/>
            <person name="Kumagai A."/>
            <person name="Itakura S."/>
            <person name="Fukuzumi Y."/>
            <person name="Fujimori Y."/>
            <person name="Komiyama M."/>
            <person name="Tashiro H."/>
            <person name="Tanigami A."/>
            <person name="Fujiwara T."/>
            <person name="Ono T."/>
            <person name="Yamada K."/>
            <person name="Fujii Y."/>
            <person name="Ozaki K."/>
            <person name="Hirao M."/>
            <person name="Ohmori Y."/>
            <person name="Kawabata A."/>
            <person name="Hikiji T."/>
            <person name="Kobatake N."/>
            <person name="Inagaki H."/>
            <person name="Ikema Y."/>
            <person name="Okamoto S."/>
            <person name="Okitani R."/>
            <person name="Kawakami T."/>
            <person name="Noguchi S."/>
            <person name="Itoh T."/>
            <person name="Shigeta K."/>
            <person name="Senba T."/>
            <person name="Matsumura K."/>
            <person name="Nakajima Y."/>
            <person name="Mizuno T."/>
            <person name="Morinaga M."/>
            <person name="Sasaki M."/>
            <person name="Togashi T."/>
            <person name="Oyama M."/>
            <person name="Hata H."/>
            <person name="Watanabe M."/>
            <person name="Komatsu T."/>
            <person name="Mizushima-Sugano J."/>
            <person name="Satoh T."/>
            <person name="Shirai Y."/>
            <person name="Takahashi Y."/>
            <person name="Nakagawa K."/>
            <person name="Okumura K."/>
            <person name="Nagase T."/>
            <person name="Nomura N."/>
            <person name="Kikuchi H."/>
            <person name="Masuho Y."/>
            <person name="Yamashita R."/>
            <person name="Nakai K."/>
            <person name="Yada T."/>
            <person name="Nakamura Y."/>
            <person name="Ohara O."/>
            <person name="Isogai T."/>
            <person name="Sugano S."/>
        </authorList>
    </citation>
    <scope>NUCLEOTIDE SEQUENCE [LARGE SCALE MRNA]</scope>
    <source>
        <tissue>Testis</tissue>
    </source>
</reference>
<reference key="3">
    <citation type="journal article" date="2004" name="Nature">
        <title>The DNA sequence and comparative analysis of human chromosome 10.</title>
        <authorList>
            <person name="Deloukas P."/>
            <person name="Earthrowl M.E."/>
            <person name="Grafham D.V."/>
            <person name="Rubenfield M."/>
            <person name="French L."/>
            <person name="Steward C.A."/>
            <person name="Sims S.K."/>
            <person name="Jones M.C."/>
            <person name="Searle S."/>
            <person name="Scott C."/>
            <person name="Howe K."/>
            <person name="Hunt S.E."/>
            <person name="Andrews T.D."/>
            <person name="Gilbert J.G.R."/>
            <person name="Swarbreck D."/>
            <person name="Ashurst J.L."/>
            <person name="Taylor A."/>
            <person name="Battles J."/>
            <person name="Bird C.P."/>
            <person name="Ainscough R."/>
            <person name="Almeida J.P."/>
            <person name="Ashwell R.I.S."/>
            <person name="Ambrose K.D."/>
            <person name="Babbage A.K."/>
            <person name="Bagguley C.L."/>
            <person name="Bailey J."/>
            <person name="Banerjee R."/>
            <person name="Bates K."/>
            <person name="Beasley H."/>
            <person name="Bray-Allen S."/>
            <person name="Brown A.J."/>
            <person name="Brown J.Y."/>
            <person name="Burford D.C."/>
            <person name="Burrill W."/>
            <person name="Burton J."/>
            <person name="Cahill P."/>
            <person name="Camire D."/>
            <person name="Carter N.P."/>
            <person name="Chapman J.C."/>
            <person name="Clark S.Y."/>
            <person name="Clarke G."/>
            <person name="Clee C.M."/>
            <person name="Clegg S."/>
            <person name="Corby N."/>
            <person name="Coulson A."/>
            <person name="Dhami P."/>
            <person name="Dutta I."/>
            <person name="Dunn M."/>
            <person name="Faulkner L."/>
            <person name="Frankish A."/>
            <person name="Frankland J.A."/>
            <person name="Garner P."/>
            <person name="Garnett J."/>
            <person name="Gribble S."/>
            <person name="Griffiths C."/>
            <person name="Grocock R."/>
            <person name="Gustafson E."/>
            <person name="Hammond S."/>
            <person name="Harley J.L."/>
            <person name="Hart E."/>
            <person name="Heath P.D."/>
            <person name="Ho T.P."/>
            <person name="Hopkins B."/>
            <person name="Horne J."/>
            <person name="Howden P.J."/>
            <person name="Huckle E."/>
            <person name="Hynds C."/>
            <person name="Johnson C."/>
            <person name="Johnson D."/>
            <person name="Kana A."/>
            <person name="Kay M."/>
            <person name="Kimberley A.M."/>
            <person name="Kershaw J.K."/>
            <person name="Kokkinaki M."/>
            <person name="Laird G.K."/>
            <person name="Lawlor S."/>
            <person name="Lee H.M."/>
            <person name="Leongamornlert D.A."/>
            <person name="Laird G."/>
            <person name="Lloyd C."/>
            <person name="Lloyd D.M."/>
            <person name="Loveland J."/>
            <person name="Lovell J."/>
            <person name="McLaren S."/>
            <person name="McLay K.E."/>
            <person name="McMurray A."/>
            <person name="Mashreghi-Mohammadi M."/>
            <person name="Matthews L."/>
            <person name="Milne S."/>
            <person name="Nickerson T."/>
            <person name="Nguyen M."/>
            <person name="Overton-Larty E."/>
            <person name="Palmer S.A."/>
            <person name="Pearce A.V."/>
            <person name="Peck A.I."/>
            <person name="Pelan S."/>
            <person name="Phillimore B."/>
            <person name="Porter K."/>
            <person name="Rice C.M."/>
            <person name="Rogosin A."/>
            <person name="Ross M.T."/>
            <person name="Sarafidou T."/>
            <person name="Sehra H.K."/>
            <person name="Shownkeen R."/>
            <person name="Skuce C.D."/>
            <person name="Smith M."/>
            <person name="Standring L."/>
            <person name="Sycamore N."/>
            <person name="Tester J."/>
            <person name="Thorpe A."/>
            <person name="Torcasso W."/>
            <person name="Tracey A."/>
            <person name="Tromans A."/>
            <person name="Tsolas J."/>
            <person name="Wall M."/>
            <person name="Walsh J."/>
            <person name="Wang H."/>
            <person name="Weinstock K."/>
            <person name="West A.P."/>
            <person name="Willey D.L."/>
            <person name="Whitehead S.L."/>
            <person name="Wilming L."/>
            <person name="Wray P.W."/>
            <person name="Young L."/>
            <person name="Chen Y."/>
            <person name="Lovering R.C."/>
            <person name="Moschonas N.K."/>
            <person name="Siebert R."/>
            <person name="Fechtel K."/>
            <person name="Bentley D."/>
            <person name="Durbin R.M."/>
            <person name="Hubbard T."/>
            <person name="Doucette-Stamm L."/>
            <person name="Beck S."/>
            <person name="Smith D.R."/>
            <person name="Rogers J."/>
        </authorList>
    </citation>
    <scope>NUCLEOTIDE SEQUENCE [LARGE SCALE GENOMIC DNA]</scope>
</reference>
<reference key="4">
    <citation type="submission" date="2005-09" db="EMBL/GenBank/DDBJ databases">
        <authorList>
            <person name="Mural R.J."/>
            <person name="Istrail S."/>
            <person name="Sutton G.G."/>
            <person name="Florea L."/>
            <person name="Halpern A.L."/>
            <person name="Mobarry C.M."/>
            <person name="Lippert R."/>
            <person name="Walenz B."/>
            <person name="Shatkay H."/>
            <person name="Dew I."/>
            <person name="Miller J.R."/>
            <person name="Flanigan M.J."/>
            <person name="Edwards N.J."/>
            <person name="Bolanos R."/>
            <person name="Fasulo D."/>
            <person name="Halldorsson B.V."/>
            <person name="Hannenhalli S."/>
            <person name="Turner R."/>
            <person name="Yooseph S."/>
            <person name="Lu F."/>
            <person name="Nusskern D.R."/>
            <person name="Shue B.C."/>
            <person name="Zheng X.H."/>
            <person name="Zhong F."/>
            <person name="Delcher A.L."/>
            <person name="Huson D.H."/>
            <person name="Kravitz S.A."/>
            <person name="Mouchard L."/>
            <person name="Reinert K."/>
            <person name="Remington K.A."/>
            <person name="Clark A.G."/>
            <person name="Waterman M.S."/>
            <person name="Eichler E.E."/>
            <person name="Adams M.D."/>
            <person name="Hunkapiller M.W."/>
            <person name="Myers E.W."/>
            <person name="Venter J.C."/>
        </authorList>
    </citation>
    <scope>NUCLEOTIDE SEQUENCE [LARGE SCALE GENOMIC DNA]</scope>
</reference>
<reference key="5">
    <citation type="journal article" date="2007" name="BMC Genomics">
        <title>The full-ORF clone resource of the German cDNA consortium.</title>
        <authorList>
            <person name="Bechtel S."/>
            <person name="Rosenfelder H."/>
            <person name="Duda A."/>
            <person name="Schmidt C.P."/>
            <person name="Ernst U."/>
            <person name="Wellenreuther R."/>
            <person name="Mehrle A."/>
            <person name="Schuster C."/>
            <person name="Bahr A."/>
            <person name="Bloecker H."/>
            <person name="Heubner D."/>
            <person name="Hoerlein A."/>
            <person name="Michel G."/>
            <person name="Wedler H."/>
            <person name="Koehrer K."/>
            <person name="Ottenwaelder B."/>
            <person name="Poustka A."/>
            <person name="Wiemann S."/>
            <person name="Schupp I."/>
        </authorList>
    </citation>
    <scope>NUCLEOTIDE SEQUENCE [LARGE SCALE MRNA] OF 151-708</scope>
    <source>
        <tissue>Melanoma</tissue>
    </source>
</reference>
<reference key="6">
    <citation type="journal article" date="2008" name="Genes Dev.">
        <title>Trabid, a new positive regulator of Wnt-induced transcription with preference for binding and cleaving K63-linked ubiquitin chains.</title>
        <authorList>
            <person name="Tran H."/>
            <person name="Hamada F."/>
            <person name="Schwarz-Romond T."/>
            <person name="Bienz M."/>
        </authorList>
    </citation>
    <scope>FUNCTION</scope>
    <scope>SUBCELLULAR LOCATION</scope>
    <scope>INTERACTION WITH APC</scope>
    <scope>DOMAIN</scope>
    <scope>MUTAGENESIS OF CYS-10; 14-THR-TYR-15; CYS-90; 94-THR-TYR-95; CYS-155; 159-THR-TYR-160 AND CYS-443</scope>
</reference>
<reference key="7">
    <citation type="journal article" date="2011" name="BMC Biol.">
        <title>Identification and characterization of a set of conserved and new regulators of cytoskeletal organisation, cell morphology and migration.</title>
        <authorList>
            <person name="Bai S.W."/>
            <person name="Herrera-Abreu M.T."/>
            <person name="Rohn J.L."/>
            <person name="Racine V."/>
            <person name="Tajadura V."/>
            <person name="Suryavanshi N."/>
            <person name="Bechtel S."/>
            <person name="Wiemann S."/>
            <person name="Baum B."/>
            <person name="Ridley A.J."/>
        </authorList>
    </citation>
    <scope>FUNCTION</scope>
    <scope>SUBCELLULAR LOCATION</scope>
</reference>
<reference key="8">
    <citation type="journal article" date="2013" name="Cell">
        <title>OTU deubiquitinases reveal mechanisms of linkage specificity and enable ubiquitin chain restriction analysis.</title>
        <authorList>
            <person name="Mevissen T.E."/>
            <person name="Hospenthal M.K."/>
            <person name="Geurink P.P."/>
            <person name="Elliott P.R."/>
            <person name="Akutsu M."/>
            <person name="Arnaudo N."/>
            <person name="Ekkebus R."/>
            <person name="Kulathu Y."/>
            <person name="Wauer T."/>
            <person name="El Oualid F."/>
            <person name="Freund S.M."/>
            <person name="Ovaa H."/>
            <person name="Komander D."/>
        </authorList>
    </citation>
    <scope>FUNCTION</scope>
    <scope>CATALYTIC ACTIVITY</scope>
</reference>
<reference key="9">
    <citation type="journal article" date="2015" name="Mol. Cell">
        <title>K29-selective ubiquitin binding domain reveals structural basis of specificity and heterotypic nature of K29 polyubiquitin.</title>
        <authorList>
            <person name="Kristariyanto Y.A."/>
            <person name="Abdul Rehman S.A."/>
            <person name="Campbell D.G."/>
            <person name="Morrice N.A."/>
            <person name="Johnson C."/>
            <person name="Toth R."/>
            <person name="Kulathu Y."/>
        </authorList>
    </citation>
    <scope>FUNCTION</scope>
    <scope>CATALYTIC ACTIVITY</scope>
    <scope>DOMAIN</scope>
    <scope>MUTAGENESIS OF TYR-12; THR-14; TYR-14; GLU-16; THR-25; MET-26 AND CYS-443</scope>
</reference>
<reference key="10">
    <citation type="journal article" date="2021" name="Nat. Commun.">
        <title>VPS34 K29/K48 branched ubiquitination governed by UBE3C and TRABID regulates autophagy, proteostasis and liver metabolism.</title>
        <authorList>
            <person name="Chen Y.H."/>
            <person name="Huang T.Y."/>
            <person name="Lin Y.T."/>
            <person name="Lin S.Y."/>
            <person name="Li W.H."/>
            <person name="Hsiao H.J."/>
            <person name="Yan R.L."/>
            <person name="Tang H.W."/>
            <person name="Shen Z.Q."/>
            <person name="Chen G.C."/>
            <person name="Wu K.P."/>
            <person name="Tsai T.F."/>
            <person name="Chen R.H."/>
        </authorList>
    </citation>
    <scope>FUNCTION</scope>
    <scope>CATALYTIC ACTIVITY</scope>
</reference>
<reference key="11">
    <citation type="journal article" date="2012" name="Nat. Struct. Mol. Biol.">
        <title>An ankyrin-repeat ubiquitin-binding domain determines TRABID's specificity for atypical ubiquitin chains.</title>
        <authorList>
            <person name="Licchesi J.D."/>
            <person name="Mieszczanek J."/>
            <person name="Mevissen T.E."/>
            <person name="Rutherford T.J."/>
            <person name="Akutsu M."/>
            <person name="Virdee S."/>
            <person name="El Oualid F."/>
            <person name="Chin J.W."/>
            <person name="Ovaa H."/>
            <person name="Bienz M."/>
            <person name="Komander D."/>
        </authorList>
    </citation>
    <scope>X-RAY CRYSTALLOGRAPHY (2.23 ANGSTROMS) OF 245-697</scope>
    <scope>FUNCTION</scope>
    <scope>LINKAGE SPECIFICITY</scope>
    <scope>ACTIVE SITE</scope>
    <scope>DOMAIN ANK REPEATS</scope>
</reference>
<reference evidence="17" key="12">
    <citation type="journal article" date="2015" name="Mol. Cell">
        <title>Assembly and specific recognition of K29- and K33-linked polyubiquitin.</title>
        <authorList>
            <person name="Michel M.A."/>
            <person name="Elliott P.R."/>
            <person name="Swatek K.N."/>
            <person name="Simicek M."/>
            <person name="Pruneda J.N."/>
            <person name="Wagstaff J.L."/>
            <person name="Freund S.M."/>
            <person name="Komander D."/>
        </authorList>
    </citation>
    <scope>X-RAY CRYSTALLOGRAPHY (3.40 ANGSTROMS) OF 1-33 IN COMPLEX WITH ZINC</scope>
    <scope>FUNCTION</scope>
    <scope>CATALYTIC ACTIVITY</scope>
    <scope>SUBCELLULAR LOCATION</scope>
    <scope>DOMAIN</scope>
    <scope>MUTAGENESIS OF TYR-15; TRP-18; SER-20; THR-25 AND CYS-443</scope>
</reference>
<protein>
    <recommendedName>
        <fullName evidence="15">Ubiquitin thioesterase ZRANB1</fullName>
        <ecNumber evidence="9 10 11 12">3.4.19.12</ecNumber>
    </recommendedName>
    <alternativeName>
        <fullName evidence="13">TRAF-binding domain-containing protein</fullName>
        <shortName evidence="13">hTrabid</shortName>
    </alternativeName>
    <alternativeName>
        <fullName evidence="14">Zinc finger Ran-binding domain-containing protein 1</fullName>
    </alternativeName>
</protein>